<evidence type="ECO:0000250" key="1">
    <source>
        <dbReference type="UniProtKB" id="E9Q557"/>
    </source>
</evidence>
<evidence type="ECO:0000250" key="2">
    <source>
        <dbReference type="UniProtKB" id="F1LMV6"/>
    </source>
</evidence>
<evidence type="ECO:0000255" key="3"/>
<evidence type="ECO:0000255" key="4">
    <source>
        <dbReference type="PROSITE-ProRule" id="PRU00192"/>
    </source>
</evidence>
<evidence type="ECO:0000256" key="5">
    <source>
        <dbReference type="SAM" id="MobiDB-lite"/>
    </source>
</evidence>
<evidence type="ECO:0000269" key="6">
    <source>
    </source>
</evidence>
<evidence type="ECO:0000269" key="7">
    <source>
    </source>
</evidence>
<evidence type="ECO:0000269" key="8">
    <source>
    </source>
</evidence>
<evidence type="ECO:0000269" key="9">
    <source>
    </source>
</evidence>
<evidence type="ECO:0000269" key="10">
    <source>
    </source>
</evidence>
<evidence type="ECO:0000269" key="11">
    <source>
    </source>
</evidence>
<evidence type="ECO:0000269" key="12">
    <source>
    </source>
</evidence>
<evidence type="ECO:0000269" key="13">
    <source>
    </source>
</evidence>
<evidence type="ECO:0000269" key="14">
    <source>
    </source>
</evidence>
<evidence type="ECO:0000269" key="15">
    <source>
    </source>
</evidence>
<evidence type="ECO:0000269" key="16">
    <source>
    </source>
</evidence>
<evidence type="ECO:0000269" key="17">
    <source>
    </source>
</evidence>
<evidence type="ECO:0000269" key="18">
    <source>
    </source>
</evidence>
<evidence type="ECO:0000269" key="19">
    <source>
    </source>
</evidence>
<evidence type="ECO:0000269" key="20">
    <source>
    </source>
</evidence>
<evidence type="ECO:0000269" key="21">
    <source>
    </source>
</evidence>
<evidence type="ECO:0000269" key="22">
    <source>
    </source>
</evidence>
<evidence type="ECO:0000269" key="23">
    <source>
    </source>
</evidence>
<evidence type="ECO:0000269" key="24">
    <source>
    </source>
</evidence>
<evidence type="ECO:0000269" key="25">
    <source>
    </source>
</evidence>
<evidence type="ECO:0000269" key="26">
    <source>
    </source>
</evidence>
<evidence type="ECO:0000269" key="27">
    <source>
    </source>
</evidence>
<evidence type="ECO:0000269" key="28">
    <source>
    </source>
</evidence>
<evidence type="ECO:0000269" key="29">
    <source>
    </source>
</evidence>
<evidence type="ECO:0000269" key="30">
    <source>
    </source>
</evidence>
<evidence type="ECO:0000303" key="31">
    <source>
    </source>
</evidence>
<evidence type="ECO:0000303" key="32">
    <source>
    </source>
</evidence>
<evidence type="ECO:0000305" key="33"/>
<evidence type="ECO:0007744" key="34">
    <source>
        <dbReference type="PDB" id="5DZZ"/>
    </source>
</evidence>
<evidence type="ECO:0007744" key="35">
    <source>
    </source>
</evidence>
<evidence type="ECO:0007744" key="36">
    <source>
    </source>
</evidence>
<evidence type="ECO:0007744" key="37">
    <source>
    </source>
</evidence>
<evidence type="ECO:0007744" key="38">
    <source>
    </source>
</evidence>
<evidence type="ECO:0007744" key="39">
    <source>
    </source>
</evidence>
<evidence type="ECO:0007744" key="40">
    <source>
    </source>
</evidence>
<evidence type="ECO:0007829" key="41">
    <source>
        <dbReference type="PDB" id="1LM5"/>
    </source>
</evidence>
<evidence type="ECO:0007829" key="42">
    <source>
        <dbReference type="PDB" id="3R6N"/>
    </source>
</evidence>
<evidence type="ECO:0007829" key="43">
    <source>
        <dbReference type="PDB" id="5DZZ"/>
    </source>
</evidence>
<dbReference type="EMBL" id="M77830">
    <property type="protein sequence ID" value="AAA85135.1"/>
    <property type="molecule type" value="mRNA"/>
</dbReference>
<dbReference type="EMBL" id="HM151899">
    <property type="protein sequence ID" value="ADI58529.1"/>
    <property type="molecule type" value="mRNA"/>
</dbReference>
<dbReference type="EMBL" id="AL031058">
    <property type="status" value="NOT_ANNOTATED_CDS"/>
    <property type="molecule type" value="Genomic_DNA"/>
</dbReference>
<dbReference type="EMBL" id="BC140802">
    <property type="protein sequence ID" value="AAI40803.1"/>
    <property type="molecule type" value="mRNA"/>
</dbReference>
<dbReference type="EMBL" id="J05211">
    <property type="protein sequence ID" value="AAA35766.1"/>
    <property type="molecule type" value="mRNA"/>
</dbReference>
<dbReference type="EMBL" id="AF139065">
    <property type="protein sequence ID" value="AAF19785.1"/>
    <property type="molecule type" value="mRNA"/>
</dbReference>
<dbReference type="CCDS" id="CCDS4501.1">
    <molecule id="P15924-1"/>
</dbReference>
<dbReference type="CCDS" id="CCDS47368.1">
    <molecule id="P15924-2"/>
</dbReference>
<dbReference type="PIR" id="A38194">
    <property type="entry name" value="A38194"/>
</dbReference>
<dbReference type="RefSeq" id="NP_001008844.1">
    <molecule id="P15924-2"/>
    <property type="nucleotide sequence ID" value="NM_001008844.3"/>
</dbReference>
<dbReference type="RefSeq" id="NP_001305963.1">
    <molecule id="P15924-3"/>
    <property type="nucleotide sequence ID" value="NM_001319034.2"/>
</dbReference>
<dbReference type="RefSeq" id="NP_004406.2">
    <molecule id="P15924-1"/>
    <property type="nucleotide sequence ID" value="NM_004415.4"/>
</dbReference>
<dbReference type="PDB" id="1LM5">
    <property type="method" value="X-ray"/>
    <property type="resolution" value="1.80 A"/>
    <property type="chains" value="A/B=2609-2822"/>
</dbReference>
<dbReference type="PDB" id="1LM7">
    <property type="method" value="X-ray"/>
    <property type="resolution" value="3.00 A"/>
    <property type="chains" value="A/B=2209-2456"/>
</dbReference>
<dbReference type="PDB" id="3R6N">
    <property type="method" value="X-ray"/>
    <property type="resolution" value="2.95 A"/>
    <property type="chains" value="A/B=178-627"/>
</dbReference>
<dbReference type="PDB" id="5DZZ">
    <property type="method" value="X-ray"/>
    <property type="resolution" value="2.60 A"/>
    <property type="chains" value="A=1960-2448"/>
</dbReference>
<dbReference type="PDBsum" id="1LM5"/>
<dbReference type="PDBsum" id="1LM7"/>
<dbReference type="PDBsum" id="3R6N"/>
<dbReference type="PDBsum" id="5DZZ"/>
<dbReference type="SASBDB" id="P15924"/>
<dbReference type="SMR" id="P15924"/>
<dbReference type="BioGRID" id="108166">
    <property type="interactions" value="427"/>
</dbReference>
<dbReference type="DIP" id="DIP-109N"/>
<dbReference type="FunCoup" id="P15924">
    <property type="interactions" value="1190"/>
</dbReference>
<dbReference type="IntAct" id="P15924">
    <property type="interactions" value="144"/>
</dbReference>
<dbReference type="MINT" id="P15924"/>
<dbReference type="STRING" id="9606.ENSP00000369129"/>
<dbReference type="DrugBank" id="DB11638">
    <property type="generic name" value="Artenimol"/>
</dbReference>
<dbReference type="DrugBank" id="DB01593">
    <property type="generic name" value="Zinc"/>
</dbReference>
<dbReference type="DrugBank" id="DB14487">
    <property type="generic name" value="Zinc acetate"/>
</dbReference>
<dbReference type="TCDB" id="8.A.66.1.9">
    <property type="family name" value="the dystrophin (dystrophin) family"/>
</dbReference>
<dbReference type="CarbonylDB" id="P15924"/>
<dbReference type="GlyGen" id="P15924">
    <property type="glycosylation" value="6 sites, 2 N-linked glycans (2 sites), 1 O-linked glycan (4 sites)"/>
</dbReference>
<dbReference type="iPTMnet" id="P15924"/>
<dbReference type="MetOSite" id="P15924"/>
<dbReference type="PhosphoSitePlus" id="P15924"/>
<dbReference type="SwissPalm" id="P15924"/>
<dbReference type="BioMuta" id="DSP"/>
<dbReference type="DMDM" id="115502381"/>
<dbReference type="CPTAC" id="CPTAC-498"/>
<dbReference type="CPTAC" id="CPTAC-499"/>
<dbReference type="jPOST" id="P15924"/>
<dbReference type="MassIVE" id="P15924"/>
<dbReference type="PaxDb" id="9606-ENSP00000369129"/>
<dbReference type="PeptideAtlas" id="P15924"/>
<dbReference type="PRIDE" id="P15924"/>
<dbReference type="ProteomicsDB" id="53244">
    <molecule id="P15924-1"/>
</dbReference>
<dbReference type="ProteomicsDB" id="53245">
    <molecule id="P15924-2"/>
</dbReference>
<dbReference type="Antibodypedia" id="24671">
    <property type="antibodies" value="321 antibodies from 38 providers"/>
</dbReference>
<dbReference type="DNASU" id="1832"/>
<dbReference type="Ensembl" id="ENST00000379802.8">
    <molecule id="P15924-1"/>
    <property type="protein sequence ID" value="ENSP00000369129.3"/>
    <property type="gene ID" value="ENSG00000096696.17"/>
</dbReference>
<dbReference type="Ensembl" id="ENST00000418664.3">
    <molecule id="P15924-2"/>
    <property type="protein sequence ID" value="ENSP00000396591.2"/>
    <property type="gene ID" value="ENSG00000096696.17"/>
</dbReference>
<dbReference type="Ensembl" id="ENST00000710359.2">
    <molecule id="P15924-3"/>
    <property type="protein sequence ID" value="ENSP00000518230.1"/>
    <property type="gene ID" value="ENSG00000096696.17"/>
</dbReference>
<dbReference type="GeneID" id="1832"/>
<dbReference type="KEGG" id="hsa:1832"/>
<dbReference type="MANE-Select" id="ENST00000379802.8">
    <property type="protein sequence ID" value="ENSP00000369129.3"/>
    <property type="RefSeq nucleotide sequence ID" value="NM_004415.4"/>
    <property type="RefSeq protein sequence ID" value="NP_004406.2"/>
</dbReference>
<dbReference type="UCSC" id="uc003mxp.2">
    <molecule id="P15924-1"/>
    <property type="organism name" value="human"/>
</dbReference>
<dbReference type="AGR" id="HGNC:3052"/>
<dbReference type="CTD" id="1832"/>
<dbReference type="DisGeNET" id="1832"/>
<dbReference type="GeneCards" id="DSP"/>
<dbReference type="GeneReviews" id="DSP"/>
<dbReference type="HGNC" id="HGNC:3052">
    <property type="gene designation" value="DSP"/>
</dbReference>
<dbReference type="HPA" id="ENSG00000096696">
    <property type="expression patterns" value="Tissue enhanced (esophagus, skin)"/>
</dbReference>
<dbReference type="MalaCards" id="DSP"/>
<dbReference type="MIM" id="125647">
    <property type="type" value="gene"/>
</dbReference>
<dbReference type="MIM" id="605676">
    <property type="type" value="phenotype"/>
</dbReference>
<dbReference type="MIM" id="607450">
    <property type="type" value="phenotype"/>
</dbReference>
<dbReference type="MIM" id="609638">
    <property type="type" value="phenotype"/>
</dbReference>
<dbReference type="MIM" id="612908">
    <property type="type" value="phenotype"/>
</dbReference>
<dbReference type="MIM" id="615821">
    <property type="type" value="phenotype"/>
</dbReference>
<dbReference type="neXtProt" id="NX_P15924"/>
<dbReference type="OpenTargets" id="ENSG00000096696"/>
<dbReference type="Orphanet" id="65282">
    <property type="disease" value="Carvajal syndrome"/>
</dbReference>
<dbReference type="Orphanet" id="476096">
    <property type="disease" value="Erythrokeratodermia-cardiomyopathy syndrome"/>
</dbReference>
<dbReference type="Orphanet" id="154">
    <property type="disease" value="Familial isolated dilated cardiomyopathy"/>
</dbReference>
<dbReference type="Orphanet" id="2032">
    <property type="disease" value="Idiopathic pulmonary fibrosis"/>
</dbReference>
<dbReference type="Orphanet" id="293888">
    <property type="disease" value="Inherited isolated arrhythmogenic cardiomyopathy, dominant-left variant"/>
</dbReference>
<dbReference type="Orphanet" id="293910">
    <property type="disease" value="Inherited isolated arrhythmogenic cardiomyopathy, dominant-right variant"/>
</dbReference>
<dbReference type="Orphanet" id="293899">
    <property type="disease" value="Inherited isolated arrhythmogenic ventricular dysplasia, biventricular variant"/>
</dbReference>
<dbReference type="Orphanet" id="158687">
    <property type="disease" value="Lethal acantholytic erosive disorder"/>
</dbReference>
<dbReference type="Orphanet" id="369992">
    <property type="disease" value="Severe dermatitis-multiple allergies-metabolic wasting syndrome"/>
</dbReference>
<dbReference type="Orphanet" id="293165">
    <property type="disease" value="Skin fragility-woolly hair-palmoplantar keratoderma syndrome"/>
</dbReference>
<dbReference type="Orphanet" id="50942">
    <property type="disease" value="Striate palmoplantar keratoderma"/>
</dbReference>
<dbReference type="PharmGKB" id="PA27505"/>
<dbReference type="VEuPathDB" id="HostDB:ENSG00000096696"/>
<dbReference type="eggNOG" id="KOG0516">
    <property type="taxonomic scope" value="Eukaryota"/>
</dbReference>
<dbReference type="GeneTree" id="ENSGT00940000154843"/>
<dbReference type="HOGENOM" id="CLU_000679_1_0_1"/>
<dbReference type="InParanoid" id="P15924"/>
<dbReference type="OMA" id="KYGDGMQ"/>
<dbReference type="OrthoDB" id="8938928at2759"/>
<dbReference type="PAN-GO" id="P15924">
    <property type="GO annotations" value="9 GO annotations based on evolutionary models"/>
</dbReference>
<dbReference type="PhylomeDB" id="P15924"/>
<dbReference type="TreeFam" id="TF106435"/>
<dbReference type="PathwayCommons" id="P15924"/>
<dbReference type="Reactome" id="R-HSA-351906">
    <property type="pathway name" value="Apoptotic cleavage of cell adhesion proteins"/>
</dbReference>
<dbReference type="Reactome" id="R-HSA-6798695">
    <property type="pathway name" value="Neutrophil degranulation"/>
</dbReference>
<dbReference type="Reactome" id="R-HSA-6805567">
    <property type="pathway name" value="Keratinization"/>
</dbReference>
<dbReference type="Reactome" id="R-HSA-6809371">
    <property type="pathway name" value="Formation of the cornified envelope"/>
</dbReference>
<dbReference type="Reactome" id="R-HSA-9696264">
    <property type="pathway name" value="RND3 GTPase cycle"/>
</dbReference>
<dbReference type="Reactome" id="R-HSA-9696273">
    <property type="pathway name" value="RND1 GTPase cycle"/>
</dbReference>
<dbReference type="SignaLink" id="P15924"/>
<dbReference type="SIGNOR" id="P15924"/>
<dbReference type="BioGRID-ORCS" id="1832">
    <property type="hits" value="17 hits in 1161 CRISPR screens"/>
</dbReference>
<dbReference type="CD-CODE" id="DEE660B4">
    <property type="entry name" value="Stress granule"/>
</dbReference>
<dbReference type="CD-CODE" id="FB4E32DD">
    <property type="entry name" value="Presynaptic clusters and postsynaptic densities"/>
</dbReference>
<dbReference type="ChiTaRS" id="DSP">
    <property type="organism name" value="human"/>
</dbReference>
<dbReference type="EvolutionaryTrace" id="P15924"/>
<dbReference type="GeneWiki" id="Desmoplakin"/>
<dbReference type="GenomeRNAi" id="1832"/>
<dbReference type="Pharos" id="P15924">
    <property type="development level" value="Tbio"/>
</dbReference>
<dbReference type="PRO" id="PR:P15924"/>
<dbReference type="Proteomes" id="UP000005640">
    <property type="component" value="Chromosome 6"/>
</dbReference>
<dbReference type="RNAct" id="P15924">
    <property type="molecule type" value="protein"/>
</dbReference>
<dbReference type="Bgee" id="ENSG00000096696">
    <property type="expression patterns" value="Expressed in skin of hip and 175 other cell types or tissues"/>
</dbReference>
<dbReference type="GO" id="GO:0005912">
    <property type="term" value="C:adherens junction"/>
    <property type="evidence" value="ECO:0000250"/>
    <property type="project" value="UniProtKB"/>
</dbReference>
<dbReference type="GO" id="GO:0016323">
    <property type="term" value="C:basolateral plasma membrane"/>
    <property type="evidence" value="ECO:0007669"/>
    <property type="project" value="Ensembl"/>
</dbReference>
<dbReference type="GO" id="GO:0001533">
    <property type="term" value="C:cornified envelope"/>
    <property type="evidence" value="ECO:0000314"/>
    <property type="project" value="UniProtKB"/>
</dbReference>
<dbReference type="GO" id="GO:0005737">
    <property type="term" value="C:cytoplasm"/>
    <property type="evidence" value="ECO:0000250"/>
    <property type="project" value="UniProtKB"/>
</dbReference>
<dbReference type="GO" id="GO:0030057">
    <property type="term" value="C:desmosome"/>
    <property type="evidence" value="ECO:0000314"/>
    <property type="project" value="UniProtKB"/>
</dbReference>
<dbReference type="GO" id="GO:0070062">
    <property type="term" value="C:extracellular exosome"/>
    <property type="evidence" value="ECO:0007005"/>
    <property type="project" value="UniProtKB"/>
</dbReference>
<dbReference type="GO" id="GO:0005916">
    <property type="term" value="C:fascia adherens"/>
    <property type="evidence" value="ECO:0007669"/>
    <property type="project" value="Ensembl"/>
</dbReference>
<dbReference type="GO" id="GO:0101003">
    <property type="term" value="C:ficolin-1-rich granule membrane"/>
    <property type="evidence" value="ECO:0000304"/>
    <property type="project" value="Reactome"/>
</dbReference>
<dbReference type="GO" id="GO:0014704">
    <property type="term" value="C:intercalated disc"/>
    <property type="evidence" value="ECO:0000314"/>
    <property type="project" value="BHF-UCL"/>
</dbReference>
<dbReference type="GO" id="GO:0005882">
    <property type="term" value="C:intermediate filament"/>
    <property type="evidence" value="ECO:0007669"/>
    <property type="project" value="Ensembl"/>
</dbReference>
<dbReference type="GO" id="GO:0005634">
    <property type="term" value="C:nucleus"/>
    <property type="evidence" value="ECO:0007005"/>
    <property type="project" value="UniProtKB"/>
</dbReference>
<dbReference type="GO" id="GO:0005886">
    <property type="term" value="C:plasma membrane"/>
    <property type="evidence" value="ECO:0000314"/>
    <property type="project" value="UniProtKB"/>
</dbReference>
<dbReference type="GO" id="GO:0086083">
    <property type="term" value="F:cell adhesive protein binding involved in bundle of His cell-Purkinje myocyte communication"/>
    <property type="evidence" value="ECO:0000305"/>
    <property type="project" value="BHF-UCL"/>
</dbReference>
<dbReference type="GO" id="GO:0005080">
    <property type="term" value="F:protein kinase C binding"/>
    <property type="evidence" value="ECO:0000353"/>
    <property type="project" value="BHF-UCL"/>
</dbReference>
<dbReference type="GO" id="GO:0003723">
    <property type="term" value="F:RNA binding"/>
    <property type="evidence" value="ECO:0007005"/>
    <property type="project" value="UniProtKB"/>
</dbReference>
<dbReference type="GO" id="GO:0097110">
    <property type="term" value="F:scaffold protein binding"/>
    <property type="evidence" value="ECO:0000353"/>
    <property type="project" value="BHF-UCL"/>
</dbReference>
<dbReference type="GO" id="GO:0005200">
    <property type="term" value="F:structural constituent of cytoskeleton"/>
    <property type="evidence" value="ECO:0000304"/>
    <property type="project" value="ProtInc"/>
</dbReference>
<dbReference type="GO" id="GO:0005198">
    <property type="term" value="F:structural molecule activity"/>
    <property type="evidence" value="ECO:0000318"/>
    <property type="project" value="GO_Central"/>
</dbReference>
<dbReference type="GO" id="GO:0034332">
    <property type="term" value="P:adherens junction organization"/>
    <property type="evidence" value="ECO:0007669"/>
    <property type="project" value="Ensembl"/>
</dbReference>
<dbReference type="GO" id="GO:0086073">
    <property type="term" value="P:bundle of His cell-Purkinje myocyte adhesion involved in cell communication"/>
    <property type="evidence" value="ECO:0000315"/>
    <property type="project" value="BHF-UCL"/>
</dbReference>
<dbReference type="GO" id="GO:0098609">
    <property type="term" value="P:cell-cell adhesion"/>
    <property type="evidence" value="ECO:0000318"/>
    <property type="project" value="GO_Central"/>
</dbReference>
<dbReference type="GO" id="GO:0002934">
    <property type="term" value="P:desmosome organization"/>
    <property type="evidence" value="ECO:0000250"/>
    <property type="project" value="BHF-UCL"/>
</dbReference>
<dbReference type="GO" id="GO:0008544">
    <property type="term" value="P:epidermis development"/>
    <property type="evidence" value="ECO:0000304"/>
    <property type="project" value="ProtInc"/>
</dbReference>
<dbReference type="GO" id="GO:0090136">
    <property type="term" value="P:epithelial cell-cell adhesion"/>
    <property type="evidence" value="ECO:0000315"/>
    <property type="project" value="MGI"/>
</dbReference>
<dbReference type="GO" id="GO:0045104">
    <property type="term" value="P:intermediate filament cytoskeleton organization"/>
    <property type="evidence" value="ECO:0000318"/>
    <property type="project" value="GO_Central"/>
</dbReference>
<dbReference type="GO" id="GO:0045109">
    <property type="term" value="P:intermediate filament organization"/>
    <property type="evidence" value="ECO:0000250"/>
    <property type="project" value="BHF-UCL"/>
</dbReference>
<dbReference type="GO" id="GO:0030216">
    <property type="term" value="P:keratinocyte differentiation"/>
    <property type="evidence" value="ECO:0000314"/>
    <property type="project" value="UniProtKB"/>
</dbReference>
<dbReference type="GO" id="GO:0018149">
    <property type="term" value="P:peptide cross-linking"/>
    <property type="evidence" value="ECO:0000314"/>
    <property type="project" value="UniProtKB"/>
</dbReference>
<dbReference type="GO" id="GO:0150105">
    <property type="term" value="P:protein localization to cell-cell junction"/>
    <property type="evidence" value="ECO:0000250"/>
    <property type="project" value="BHF-UCL"/>
</dbReference>
<dbReference type="GO" id="GO:0086091">
    <property type="term" value="P:regulation of heart rate by cardiac conduction"/>
    <property type="evidence" value="ECO:0000315"/>
    <property type="project" value="BHF-UCL"/>
</dbReference>
<dbReference type="GO" id="GO:0098911">
    <property type="term" value="P:regulation of ventricular cardiac muscle cell action potential"/>
    <property type="evidence" value="ECO:0000315"/>
    <property type="project" value="BHF-UCL"/>
</dbReference>
<dbReference type="GO" id="GO:0043588">
    <property type="term" value="P:skin development"/>
    <property type="evidence" value="ECO:0000318"/>
    <property type="project" value="GO_Central"/>
</dbReference>
<dbReference type="GO" id="GO:0003223">
    <property type="term" value="P:ventricular compact myocardium morphogenesis"/>
    <property type="evidence" value="ECO:0000250"/>
    <property type="project" value="BHF-UCL"/>
</dbReference>
<dbReference type="GO" id="GO:0042060">
    <property type="term" value="P:wound healing"/>
    <property type="evidence" value="ECO:0000318"/>
    <property type="project" value="GO_Central"/>
</dbReference>
<dbReference type="CDD" id="cd00176">
    <property type="entry name" value="SPEC"/>
    <property type="match status" value="1"/>
</dbReference>
<dbReference type="FunFam" id="1.20.58.60:FF:000125">
    <property type="entry name" value="Desmoplakin"/>
    <property type="match status" value="1"/>
</dbReference>
<dbReference type="FunFam" id="1.20.58.60:FF:000123">
    <property type="entry name" value="Desmoplakin a"/>
    <property type="match status" value="1"/>
</dbReference>
<dbReference type="FunFam" id="2.30.30.40:FF:000102">
    <property type="entry name" value="Desmoplakin a"/>
    <property type="match status" value="1"/>
</dbReference>
<dbReference type="FunFam" id="3.30.160.780:FF:000001">
    <property type="entry name" value="Plectin a"/>
    <property type="match status" value="1"/>
</dbReference>
<dbReference type="FunFam" id="3.90.1290.10:FF:000001">
    <property type="entry name" value="Plectin a"/>
    <property type="match status" value="2"/>
</dbReference>
<dbReference type="FunFam" id="3.90.1290.10:FF:000002">
    <property type="entry name" value="Plectin a"/>
    <property type="match status" value="1"/>
</dbReference>
<dbReference type="FunFam" id="1.20.58.60:FF:000010">
    <property type="entry name" value="plectin isoform X2"/>
    <property type="match status" value="1"/>
</dbReference>
<dbReference type="Gene3D" id="1.20.58.1060">
    <property type="match status" value="1"/>
</dbReference>
<dbReference type="Gene3D" id="1.20.58.60">
    <property type="match status" value="3"/>
</dbReference>
<dbReference type="Gene3D" id="3.30.160.780">
    <property type="match status" value="1"/>
</dbReference>
<dbReference type="Gene3D" id="3.90.1290.10">
    <property type="entry name" value="Plakin repeat"/>
    <property type="match status" value="3"/>
</dbReference>
<dbReference type="Gene3D" id="2.30.30.40">
    <property type="entry name" value="SH3 Domains"/>
    <property type="match status" value="1"/>
</dbReference>
<dbReference type="InterPro" id="IPR041615">
    <property type="entry name" value="Desmoplakin_SH3"/>
</dbReference>
<dbReference type="InterPro" id="IPR041573">
    <property type="entry name" value="Desmoplakin_Spectrin-like"/>
</dbReference>
<dbReference type="InterPro" id="IPR043197">
    <property type="entry name" value="Plakin"/>
</dbReference>
<dbReference type="InterPro" id="IPR035915">
    <property type="entry name" value="Plakin_repeat_sf"/>
</dbReference>
<dbReference type="InterPro" id="IPR001101">
    <property type="entry name" value="Plectin_repeat"/>
</dbReference>
<dbReference type="InterPro" id="IPR001452">
    <property type="entry name" value="SH3_domain"/>
</dbReference>
<dbReference type="InterPro" id="IPR018159">
    <property type="entry name" value="Spectrin/alpha-actinin"/>
</dbReference>
<dbReference type="PANTHER" id="PTHR23169:SF26">
    <property type="entry name" value="DESMOPLAKIN"/>
    <property type="match status" value="1"/>
</dbReference>
<dbReference type="PANTHER" id="PTHR23169">
    <property type="entry name" value="ENVOPLAKIN"/>
    <property type="match status" value="1"/>
</dbReference>
<dbReference type="Pfam" id="PF00681">
    <property type="entry name" value="Plectin"/>
    <property type="match status" value="8"/>
</dbReference>
<dbReference type="Pfam" id="PF17902">
    <property type="entry name" value="SH3_10"/>
    <property type="match status" value="1"/>
</dbReference>
<dbReference type="Pfam" id="PF18373">
    <property type="entry name" value="Spectrin_2"/>
    <property type="match status" value="1"/>
</dbReference>
<dbReference type="Pfam" id="PF21019">
    <property type="entry name" value="Spectrin_3"/>
    <property type="match status" value="1"/>
</dbReference>
<dbReference type="SMART" id="SM00250">
    <property type="entry name" value="PLEC"/>
    <property type="match status" value="18"/>
</dbReference>
<dbReference type="SMART" id="SM00150">
    <property type="entry name" value="SPEC"/>
    <property type="match status" value="3"/>
</dbReference>
<dbReference type="SUPFAM" id="SSF75399">
    <property type="entry name" value="Plakin repeat"/>
    <property type="match status" value="4"/>
</dbReference>
<dbReference type="SUPFAM" id="SSF46966">
    <property type="entry name" value="Spectrin repeat"/>
    <property type="match status" value="3"/>
</dbReference>
<dbReference type="PROSITE" id="PS50002">
    <property type="entry name" value="SH3"/>
    <property type="match status" value="1"/>
</dbReference>
<name>DESP_HUMAN</name>
<proteinExistence type="evidence at protein level"/>
<organism>
    <name type="scientific">Homo sapiens</name>
    <name type="common">Human</name>
    <dbReference type="NCBI Taxonomy" id="9606"/>
    <lineage>
        <taxon>Eukaryota</taxon>
        <taxon>Metazoa</taxon>
        <taxon>Chordata</taxon>
        <taxon>Craniata</taxon>
        <taxon>Vertebrata</taxon>
        <taxon>Euteleostomi</taxon>
        <taxon>Mammalia</taxon>
        <taxon>Eutheria</taxon>
        <taxon>Euarchontoglires</taxon>
        <taxon>Primates</taxon>
        <taxon>Haplorrhini</taxon>
        <taxon>Catarrhini</taxon>
        <taxon>Hominidae</taxon>
        <taxon>Homo</taxon>
    </lineage>
</organism>
<keyword id="KW-0002">3D-structure</keyword>
<keyword id="KW-0025">Alternative splicing</keyword>
<keyword id="KW-0122">Cardiomyopathy</keyword>
<keyword id="KW-0965">Cell junction</keyword>
<keyword id="KW-1003">Cell membrane</keyword>
<keyword id="KW-0175">Coiled coil</keyword>
<keyword id="KW-0963">Cytoplasm</keyword>
<keyword id="KW-0225">Disease variant</keyword>
<keyword id="KW-0263">Epidermolysis bullosa</keyword>
<keyword id="KW-0472">Membrane</keyword>
<keyword id="KW-0488">Methylation</keyword>
<keyword id="KW-1007">Palmoplantar keratoderma</keyword>
<keyword id="KW-0597">Phosphoprotein</keyword>
<keyword id="KW-1267">Proteomics identification</keyword>
<keyword id="KW-1185">Reference proteome</keyword>
<keyword id="KW-0677">Repeat</keyword>
<keyword id="KW-0728">SH3 domain</keyword>
<gene>
    <name type="primary">DSP</name>
</gene>
<accession>P15924</accession>
<accession>B2RTT2</accession>
<accession>D7RX09</accession>
<accession>O75993</accession>
<accession>Q14189</accession>
<accession>Q9UHN4</accession>
<feature type="chain" id="PRO_0000078144" description="Desmoplakin">
    <location>
        <begin position="1"/>
        <end position="2871"/>
    </location>
</feature>
<feature type="repeat" description="Spectrin 1">
    <location>
        <begin position="178"/>
        <end position="271"/>
    </location>
</feature>
<feature type="repeat" description="Spectrin 2">
    <location>
        <begin position="272"/>
        <end position="375"/>
    </location>
</feature>
<feature type="repeat" description="Spectrin 3a">
    <location>
        <begin position="376"/>
        <end position="446"/>
    </location>
</feature>
<feature type="domain" description="SH3" evidence="4">
    <location>
        <begin position="458"/>
        <end position="515"/>
    </location>
</feature>
<feature type="repeat" description="Spectrin 3b">
    <location>
        <begin position="516"/>
        <end position="545"/>
    </location>
</feature>
<feature type="repeat" description="Spectrin 4">
    <location>
        <begin position="546"/>
        <end position="627"/>
    </location>
</feature>
<feature type="repeat" description="Spectrin 5">
    <location>
        <begin position="654"/>
        <end position="769"/>
    </location>
</feature>
<feature type="repeat" description="Spectrin 6">
    <location>
        <begin position="770"/>
        <end position="883"/>
    </location>
</feature>
<feature type="repeat" description="Plectin 1">
    <location>
        <begin position="2009"/>
        <end position="2045"/>
    </location>
</feature>
<feature type="repeat" description="Plectin 2">
    <location>
        <begin position="2046"/>
        <end position="2083"/>
    </location>
</feature>
<feature type="repeat" description="Plectin 3">
    <location>
        <begin position="2084"/>
        <end position="2121"/>
    </location>
</feature>
<feature type="repeat" description="Plectin 4">
    <location>
        <begin position="2122"/>
        <end position="2159"/>
    </location>
</feature>
<feature type="repeat" description="Plectin 5">
    <location>
        <begin position="2163"/>
        <end position="2197"/>
    </location>
</feature>
<feature type="repeat" description="Plectin 6">
    <location>
        <begin position="2198"/>
        <end position="2233"/>
    </location>
</feature>
<feature type="repeat" description="Plectin 7">
    <location>
        <begin position="2251"/>
        <end position="2288"/>
    </location>
</feature>
<feature type="repeat" description="Plectin 8">
    <location>
        <begin position="2289"/>
        <end position="2326"/>
    </location>
</feature>
<feature type="repeat" description="Plectin 9">
    <location>
        <begin position="2327"/>
        <end position="2364"/>
    </location>
</feature>
<feature type="repeat" description="Plectin 10">
    <location>
        <begin position="2365"/>
        <end position="2402"/>
    </location>
</feature>
<feature type="repeat" description="Plectin 11">
    <location>
        <begin position="2406"/>
        <end position="2440"/>
    </location>
</feature>
<feature type="repeat" description="Plectin 12">
    <location>
        <begin position="2456"/>
        <end position="2493"/>
    </location>
</feature>
<feature type="repeat" description="Plectin 13">
    <location>
        <begin position="2507"/>
        <end position="2544"/>
    </location>
</feature>
<feature type="repeat" description="Plectin 14">
    <location>
        <begin position="2610"/>
        <end position="2647"/>
    </location>
</feature>
<feature type="repeat" description="Plectin 15">
    <location>
        <begin position="2648"/>
        <end position="2685"/>
    </location>
</feature>
<feature type="repeat" description="Plectin 16">
    <location>
        <begin position="2724"/>
        <end position="2761"/>
    </location>
</feature>
<feature type="repeat" description="Plectin 17">
    <location>
        <begin position="2762"/>
        <end position="2799"/>
    </location>
</feature>
<feature type="region of interest" description="Globular 1">
    <location>
        <begin position="1"/>
        <end position="1056"/>
    </location>
</feature>
<feature type="region of interest" description="Interaction with PKP1, JUP, PKP2" evidence="6 8">
    <location>
        <begin position="1"/>
        <end position="584"/>
    </location>
</feature>
<feature type="region of interest" description="Central fibrous rod domain">
    <location>
        <begin position="1057"/>
        <end position="1945"/>
    </location>
</feature>
<feature type="region of interest" description="Globular 2">
    <location>
        <begin position="1946"/>
        <end position="2871"/>
    </location>
</feature>
<feature type="region of interest" description="4.5 X 38 AA tandem repeats (Domain A)" evidence="10">
    <location>
        <begin position="1960"/>
        <end position="2208"/>
    </location>
</feature>
<feature type="region of interest" description="4.5 X 38 AA tandem repeats (Domain B)" evidence="10">
    <location>
        <begin position="2244"/>
        <end position="2446"/>
    </location>
</feature>
<feature type="region of interest" description="4.5 X 38 AA tandem repeats (Domain C)" evidence="10">
    <location>
        <begin position="2609"/>
        <end position="2822"/>
    </location>
</feature>
<feature type="region of interest" description="Disordered" evidence="5">
    <location>
        <begin position="2810"/>
        <end position="2871"/>
    </location>
</feature>
<feature type="region of interest" description="6 X 4 AA tandem repeats of G-S-R-[SR]">
    <location>
        <begin position="2824"/>
        <end position="2847"/>
    </location>
</feature>
<feature type="coiled-coil region" evidence="3">
    <location>
        <begin position="1018"/>
        <end position="1945"/>
    </location>
</feature>
<feature type="compositionally biased region" description="Polar residues" evidence="5">
    <location>
        <begin position="2810"/>
        <end position="2823"/>
    </location>
</feature>
<feature type="compositionally biased region" description="Low complexity" evidence="5">
    <location>
        <begin position="2824"/>
        <end position="2847"/>
    </location>
</feature>
<feature type="compositionally biased region" description="Low complexity" evidence="5">
    <location>
        <begin position="2856"/>
        <end position="2871"/>
    </location>
</feature>
<feature type="modified residue" description="Phosphoserine" evidence="38 39 40">
    <location>
        <position position="22"/>
    </location>
</feature>
<feature type="modified residue" description="Phosphoserine" evidence="40">
    <location>
        <position position="53"/>
    </location>
</feature>
<feature type="modified residue" description="Phosphotyrosine" evidence="1">
    <location>
        <position position="56"/>
    </location>
</feature>
<feature type="modified residue" description="Phosphothreonine" evidence="1">
    <location>
        <position position="61"/>
    </location>
</feature>
<feature type="modified residue" description="Phosphoserine" evidence="36 39 40">
    <location>
        <position position="165"/>
    </location>
</feature>
<feature type="modified residue" description="Phosphoserine" evidence="36 40">
    <location>
        <position position="166"/>
    </location>
</feature>
<feature type="modified residue" description="Phosphoserine" evidence="36">
    <location>
        <position position="176"/>
    </location>
</feature>
<feature type="modified residue" description="Phosphoserine" evidence="39">
    <location>
        <position position="1658"/>
    </location>
</feature>
<feature type="modified residue" description="Phosphoserine" evidence="39 40">
    <location>
        <position position="1708"/>
    </location>
</feature>
<feature type="modified residue" description="Phosphoserine" evidence="36 37 39">
    <location>
        <position position="2024"/>
    </location>
</feature>
<feature type="modified residue" description="Phosphoserine" evidence="37">
    <location>
        <position position="2207"/>
    </location>
</feature>
<feature type="modified residue" description="Phosphoserine" evidence="36 37 38 39 40">
    <location>
        <position position="2209"/>
    </location>
</feature>
<feature type="modified residue" description="Phosphoserine" evidence="40">
    <location>
        <position position="2225"/>
    </location>
</feature>
<feature type="modified residue" description="Phosphoserine" evidence="39">
    <location>
        <position position="2810"/>
    </location>
</feature>
<feature type="modified residue" description="Phosphoserine" evidence="36 37">
    <location>
        <position position="2815"/>
    </location>
</feature>
<feature type="modified residue" description="Phosphotyrosine" evidence="39">
    <location>
        <position position="2817"/>
    </location>
</feature>
<feature type="modified residue" description="Phosphoserine" evidence="38 39">
    <location>
        <position position="2820"/>
    </location>
</feature>
<feature type="modified residue" description="Phosphoserine" evidence="36">
    <location>
        <position position="2821"/>
    </location>
</feature>
<feature type="modified residue" description="Phosphoserine" evidence="35 36 37 38 39">
    <location>
        <position position="2825"/>
    </location>
</feature>
<feature type="modified residue" description="Omega-N-methylarginine" evidence="1">
    <location>
        <position position="2826"/>
    </location>
</feature>
<feature type="modified residue" description="Omega-N-methylarginine" evidence="1">
    <location>
        <position position="2847"/>
    </location>
</feature>
<feature type="modified residue" description="Phosphoserine" evidence="29 36">
    <location>
        <position position="2849"/>
    </location>
</feature>
<feature type="modified residue" description="Phosphothreonine" evidence="36">
    <location>
        <position position="2853"/>
    </location>
</feature>
<feature type="modified residue" description="Phosphoserine" evidence="36">
    <location>
        <position position="2868"/>
    </location>
</feature>
<feature type="splice variant" id="VSP_005070" description="In isoform DPII." evidence="31">
    <location>
        <begin position="1195"/>
        <end position="1793"/>
    </location>
</feature>
<feature type="splice variant" id="VSP_053769" description="In isoform DSPIa." evidence="32">
    <location>
        <begin position="1351"/>
        <end position="1793"/>
    </location>
</feature>
<feature type="sequence variant" id="VAR_015569" description="In DCWHK; dbSNP:rs121912993." evidence="9">
    <original>N</original>
    <variation>K</variation>
    <location>
        <position position="287"/>
    </location>
</feature>
<feature type="sequence variant" id="VAR_015402" description="In ARVD8; uncertain significance; dbSNP:rs121912992." evidence="11 14 19">
    <original>S</original>
    <variation>R</variation>
    <location>
        <position position="299"/>
    </location>
</feature>
<feature type="sequence variant" id="VAR_033862" description="In dbSNP:rs17604693." evidence="18 19">
    <original>I</original>
    <variation>F</variation>
    <location>
        <position position="305"/>
    </location>
</feature>
<feature type="sequence variant" id="VAR_065693" description="In ARVD8; dbSNP:rs934142779.">
    <original>I</original>
    <variation>V</variation>
    <location>
        <position position="445"/>
    </location>
</feature>
<feature type="sequence variant" id="VAR_072432" description="In DCWHKTA; dbSNP:rs606231295." evidence="24">
    <original>T</original>
    <variation>I</variation>
    <location>
        <position position="564"/>
    </location>
</feature>
<feature type="sequence variant" id="VAR_072433" description="In DCWHKTA; dbSNP:rs606231294." evidence="21">
    <original>S</original>
    <variation>L</variation>
    <location>
        <position position="597"/>
    </location>
</feature>
<feature type="sequence variant" id="VAR_023814" description="In ARVD8; dbSNP:rs777407386." evidence="14 19">
    <original>R</original>
    <variation>K</variation>
    <location>
        <position position="1255"/>
    </location>
</feature>
<feature type="sequence variant" id="VAR_065694" description="In dbSNP:rs375919492." evidence="19">
    <original>A</original>
    <variation>V</variation>
    <location>
        <position position="1505"/>
    </location>
</feature>
<feature type="sequence variant" id="VAR_020468" description="In dbSNP:rs2076299." evidence="18 19">
    <original>Y</original>
    <variation>C</variation>
    <location>
        <position position="1512"/>
    </location>
</feature>
<feature type="sequence variant" id="VAR_065695" description="In dbSNP:rs28763966." evidence="18 19">
    <original>N</original>
    <variation>K</variation>
    <location>
        <position position="1526"/>
    </location>
</feature>
<feature type="sequence variant" id="VAR_065696" description="In dbSNP:rs28763967." evidence="18 19">
    <original>R</original>
    <variation>C</variation>
    <location>
        <position position="1537"/>
    </location>
</feature>
<feature type="sequence variant" id="VAR_023815" description="In dbSNP:rs6929069." evidence="18 19">
    <original>R</original>
    <variation>Q</variation>
    <location>
        <position position="1738"/>
    </location>
</feature>
<feature type="sequence variant" id="VAR_023816" description="In ARVD8; uncertain significance; dbSNP:rs34738426." evidence="14 19">
    <original>R</original>
    <variation>I</variation>
    <location>
        <position position="1775"/>
    </location>
</feature>
<feature type="sequence variant" id="VAR_065697" description="In dbSNP:rs78652302." evidence="18 22">
    <original>E</original>
    <variation>V</variation>
    <location>
        <position position="1833"/>
    </location>
</feature>
<feature type="sequence variant" id="VAR_015570" description="In DCWHK; dbSNP:rs28931610." evidence="9">
    <original>R</original>
    <variation>C</variation>
    <location>
        <position position="2366"/>
    </location>
</feature>
<feature type="sequence variant" id="VAR_018158" description="In DCWHK; dbSNP:rs376923069." evidence="13">
    <original>G</original>
    <variation>R</variation>
    <location>
        <position position="2375"/>
    </location>
</feature>
<feature type="sequence conflict" description="In Ref. 1; AAA85135." evidence="33" ref="1">
    <original>A</original>
    <variation>R</variation>
    <location>
        <position position="905"/>
    </location>
</feature>
<feature type="sequence conflict" description="In Ref. 5; AAA35766." evidence="33" ref="5">
    <original>D</original>
    <variation>R</variation>
    <location>
        <position position="1120"/>
    </location>
</feature>
<feature type="sequence conflict" description="In Ref. 1; AAA85135 and 5; AAA35766." evidence="33" ref="1 5">
    <original>RL</original>
    <variation>SV</variation>
    <location>
        <begin position="2687"/>
        <end position="2688"/>
    </location>
</feature>
<feature type="helix" evidence="42">
    <location>
        <begin position="182"/>
        <end position="201"/>
    </location>
</feature>
<feature type="helix" evidence="42">
    <location>
        <begin position="211"/>
        <end position="241"/>
    </location>
</feature>
<feature type="helix" evidence="42">
    <location>
        <begin position="245"/>
        <end position="294"/>
    </location>
</feature>
<feature type="helix" evidence="42">
    <location>
        <begin position="307"/>
        <end position="338"/>
    </location>
</feature>
<feature type="helix" evidence="42">
    <location>
        <begin position="344"/>
        <end position="402"/>
    </location>
</feature>
<feature type="helix" evidence="42">
    <location>
        <begin position="411"/>
        <end position="442"/>
    </location>
</feature>
<feature type="helix" evidence="42">
    <location>
        <begin position="449"/>
        <end position="451"/>
    </location>
</feature>
<feature type="strand" evidence="42">
    <location>
        <begin position="462"/>
        <end position="467"/>
    </location>
</feature>
<feature type="strand" evidence="42">
    <location>
        <begin position="469"/>
        <end position="471"/>
    </location>
</feature>
<feature type="strand" evidence="42">
    <location>
        <begin position="474"/>
        <end position="476"/>
    </location>
</feature>
<feature type="strand" evidence="42">
    <location>
        <begin position="481"/>
        <end position="486"/>
    </location>
</feature>
<feature type="strand" evidence="42">
    <location>
        <begin position="488"/>
        <end position="496"/>
    </location>
</feature>
<feature type="strand" evidence="42">
    <location>
        <begin position="498"/>
        <end position="500"/>
    </location>
</feature>
<feature type="strand" evidence="42">
    <location>
        <begin position="503"/>
        <end position="506"/>
    </location>
</feature>
<feature type="helix" evidence="42">
    <location>
        <begin position="507"/>
        <end position="509"/>
    </location>
</feature>
<feature type="helix" evidence="42">
    <location>
        <begin position="517"/>
        <end position="561"/>
    </location>
</feature>
<feature type="helix" evidence="42">
    <location>
        <begin position="565"/>
        <end position="568"/>
    </location>
</feature>
<feature type="turn" evidence="42">
    <location>
        <begin position="573"/>
        <end position="575"/>
    </location>
</feature>
<feature type="helix" evidence="42">
    <location>
        <begin position="576"/>
        <end position="594"/>
    </location>
</feature>
<feature type="helix" evidence="42">
    <location>
        <begin position="602"/>
        <end position="624"/>
    </location>
</feature>
<feature type="helix" evidence="43">
    <location>
        <begin position="1963"/>
        <end position="1965"/>
    </location>
</feature>
<feature type="strand" evidence="43">
    <location>
        <begin position="1967"/>
        <end position="1969"/>
    </location>
</feature>
<feature type="strand" evidence="43">
    <location>
        <begin position="1971"/>
        <end position="1976"/>
    </location>
</feature>
<feature type="helix" evidence="43">
    <location>
        <begin position="1977"/>
        <end position="1982"/>
    </location>
</feature>
<feature type="helix" evidence="43">
    <location>
        <begin position="1988"/>
        <end position="1996"/>
    </location>
</feature>
<feature type="strand" evidence="43">
    <location>
        <begin position="1997"/>
        <end position="1999"/>
    </location>
</feature>
<feature type="helix" evidence="43">
    <location>
        <begin position="2001"/>
        <end position="2005"/>
    </location>
</feature>
<feature type="helix" evidence="43">
    <location>
        <begin position="2009"/>
        <end position="2012"/>
    </location>
</feature>
<feature type="strand" evidence="43">
    <location>
        <begin position="2018"/>
        <end position="2021"/>
    </location>
</feature>
<feature type="strand" evidence="43">
    <location>
        <begin position="2023"/>
        <end position="2027"/>
    </location>
</feature>
<feature type="helix" evidence="43">
    <location>
        <begin position="2031"/>
        <end position="2036"/>
    </location>
</feature>
<feature type="helix" evidence="43">
    <location>
        <begin position="2042"/>
        <end position="2054"/>
    </location>
</feature>
<feature type="turn" evidence="43">
    <location>
        <begin position="2061"/>
        <end position="2063"/>
    </location>
</feature>
<feature type="helix" evidence="43">
    <location>
        <begin position="2069"/>
        <end position="2074"/>
    </location>
</feature>
<feature type="helix" evidence="43">
    <location>
        <begin position="2083"/>
        <end position="2094"/>
    </location>
</feature>
<feature type="turn" evidence="43">
    <location>
        <begin position="2099"/>
        <end position="2101"/>
    </location>
</feature>
<feature type="helix" evidence="43">
    <location>
        <begin position="2107"/>
        <end position="2112"/>
    </location>
</feature>
<feature type="helix" evidence="43">
    <location>
        <begin position="2118"/>
        <end position="2129"/>
    </location>
</feature>
<feature type="turn" evidence="43">
    <location>
        <begin position="2130"/>
        <end position="2132"/>
    </location>
</feature>
<feature type="strand" evidence="43">
    <location>
        <begin position="2133"/>
        <end position="2136"/>
    </location>
</feature>
<feature type="turn" evidence="43">
    <location>
        <begin position="2137"/>
        <end position="2140"/>
    </location>
</feature>
<feature type="strand" evidence="43">
    <location>
        <begin position="2141"/>
        <end position="2143"/>
    </location>
</feature>
<feature type="helix" evidence="43">
    <location>
        <begin position="2145"/>
        <end position="2150"/>
    </location>
</feature>
<feature type="helix" evidence="43">
    <location>
        <begin position="2156"/>
        <end position="2161"/>
    </location>
</feature>
<feature type="turn" evidence="43">
    <location>
        <begin position="2165"/>
        <end position="2168"/>
    </location>
</feature>
<feature type="strand" evidence="43">
    <location>
        <begin position="2175"/>
        <end position="2177"/>
    </location>
</feature>
<feature type="helix" evidence="43">
    <location>
        <begin position="2183"/>
        <end position="2187"/>
    </location>
</feature>
<feature type="strand" evidence="43">
    <location>
        <begin position="2190"/>
        <end position="2192"/>
    </location>
</feature>
<feature type="turn" evidence="43">
    <location>
        <begin position="2194"/>
        <end position="2196"/>
    </location>
</feature>
<feature type="strand" evidence="43">
    <location>
        <begin position="2199"/>
        <end position="2201"/>
    </location>
</feature>
<feature type="strand" evidence="43">
    <location>
        <begin position="2209"/>
        <end position="2211"/>
    </location>
</feature>
<feature type="strand" evidence="43">
    <location>
        <begin position="2213"/>
        <end position="2218"/>
    </location>
</feature>
<feature type="helix" evidence="43">
    <location>
        <begin position="2219"/>
        <end position="2224"/>
    </location>
</feature>
<feature type="helix" evidence="43">
    <location>
        <begin position="2230"/>
        <end position="2237"/>
    </location>
</feature>
<feature type="helix" evidence="43">
    <location>
        <begin position="2243"/>
        <end position="2249"/>
    </location>
</feature>
<feature type="helix" evidence="43">
    <location>
        <begin position="2251"/>
        <end position="2254"/>
    </location>
</feature>
<feature type="strand" evidence="43">
    <location>
        <begin position="2260"/>
        <end position="2265"/>
    </location>
</feature>
<feature type="turn" evidence="43">
    <location>
        <begin position="2266"/>
        <end position="2269"/>
    </location>
</feature>
<feature type="strand" evidence="43">
    <location>
        <begin position="2270"/>
        <end position="2272"/>
    </location>
</feature>
<feature type="helix" evidence="43">
    <location>
        <begin position="2274"/>
        <end position="2280"/>
    </location>
</feature>
<feature type="helix" evidence="43">
    <location>
        <begin position="2285"/>
        <end position="2296"/>
    </location>
</feature>
<feature type="strand" evidence="43">
    <location>
        <begin position="2301"/>
        <end position="2303"/>
    </location>
</feature>
<feature type="turn" evidence="43">
    <location>
        <begin position="2304"/>
        <end position="2307"/>
    </location>
</feature>
<feature type="strand" evidence="43">
    <location>
        <begin position="2308"/>
        <end position="2310"/>
    </location>
</feature>
<feature type="helix" evidence="43">
    <location>
        <begin position="2312"/>
        <end position="2317"/>
    </location>
</feature>
<feature type="helix" evidence="43">
    <location>
        <begin position="2326"/>
        <end position="2332"/>
    </location>
</feature>
<feature type="helix" evidence="43">
    <location>
        <begin position="2334"/>
        <end position="2337"/>
    </location>
</feature>
<feature type="turn" evidence="43">
    <location>
        <begin position="2342"/>
        <end position="2344"/>
    </location>
</feature>
<feature type="strand" evidence="43">
    <location>
        <begin position="2346"/>
        <end position="2348"/>
    </location>
</feature>
<feature type="helix" evidence="43">
    <location>
        <begin position="2350"/>
        <end position="2355"/>
    </location>
</feature>
<feature type="helix" evidence="43">
    <location>
        <begin position="2361"/>
        <end position="2372"/>
    </location>
</feature>
<feature type="turn" evidence="43">
    <location>
        <begin position="2373"/>
        <end position="2375"/>
    </location>
</feature>
<feature type="strand" evidence="43">
    <location>
        <begin position="2376"/>
        <end position="2379"/>
    </location>
</feature>
<feature type="turn" evidence="43">
    <location>
        <begin position="2380"/>
        <end position="2383"/>
    </location>
</feature>
<feature type="strand" evidence="43">
    <location>
        <begin position="2384"/>
        <end position="2386"/>
    </location>
</feature>
<feature type="helix" evidence="43">
    <location>
        <begin position="2390"/>
        <end position="2393"/>
    </location>
</feature>
<feature type="helix" evidence="43">
    <location>
        <begin position="2399"/>
        <end position="2406"/>
    </location>
</feature>
<feature type="turn" evidence="43">
    <location>
        <begin position="2410"/>
        <end position="2412"/>
    </location>
</feature>
<feature type="strand" evidence="43">
    <location>
        <begin position="2415"/>
        <end position="2417"/>
    </location>
</feature>
<feature type="turn" evidence="43">
    <location>
        <begin position="2418"/>
        <end position="2421"/>
    </location>
</feature>
<feature type="strand" evidence="43">
    <location>
        <begin position="2422"/>
        <end position="2424"/>
    </location>
</feature>
<feature type="helix" evidence="43">
    <location>
        <begin position="2426"/>
        <end position="2430"/>
    </location>
</feature>
<feature type="turn" evidence="43">
    <location>
        <begin position="2437"/>
        <end position="2439"/>
    </location>
</feature>
<feature type="strand" evidence="43">
    <location>
        <begin position="2442"/>
        <end position="2446"/>
    </location>
</feature>
<feature type="strand" evidence="41">
    <location>
        <begin position="2619"/>
        <end position="2624"/>
    </location>
</feature>
<feature type="turn" evidence="41">
    <location>
        <begin position="2625"/>
        <end position="2628"/>
    </location>
</feature>
<feature type="strand" evidence="41">
    <location>
        <begin position="2629"/>
        <end position="2631"/>
    </location>
</feature>
<feature type="helix" evidence="41">
    <location>
        <begin position="2633"/>
        <end position="2638"/>
    </location>
</feature>
<feature type="helix" evidence="41">
    <location>
        <begin position="2644"/>
        <end position="2655"/>
    </location>
</feature>
<feature type="turn" evidence="41">
    <location>
        <begin position="2656"/>
        <end position="2658"/>
    </location>
</feature>
<feature type="strand" evidence="41">
    <location>
        <begin position="2659"/>
        <end position="2661"/>
    </location>
</feature>
<feature type="turn" evidence="41">
    <location>
        <begin position="2663"/>
        <end position="2665"/>
    </location>
</feature>
<feature type="helix" evidence="41">
    <location>
        <begin position="2671"/>
        <end position="2676"/>
    </location>
</feature>
<feature type="helix" evidence="41">
    <location>
        <begin position="2682"/>
        <end position="2696"/>
    </location>
</feature>
<feature type="helix" evidence="41">
    <location>
        <begin position="2709"/>
        <end position="2714"/>
    </location>
</feature>
<feature type="helix" evidence="41">
    <location>
        <begin position="2720"/>
        <end position="2732"/>
    </location>
</feature>
<feature type="helix" evidence="41">
    <location>
        <begin position="2739"/>
        <end position="2741"/>
    </location>
</feature>
<feature type="helix" evidence="41">
    <location>
        <begin position="2747"/>
        <end position="2752"/>
    </location>
</feature>
<feature type="helix" evidence="41">
    <location>
        <begin position="2758"/>
        <end position="2765"/>
    </location>
</feature>
<feature type="helix" evidence="41">
    <location>
        <begin position="2767"/>
        <end position="2769"/>
    </location>
</feature>
<feature type="turn" evidence="41">
    <location>
        <begin position="2777"/>
        <end position="2779"/>
    </location>
</feature>
<feature type="helix" evidence="41">
    <location>
        <begin position="2785"/>
        <end position="2791"/>
    </location>
</feature>
<feature type="turn" evidence="41">
    <location>
        <begin position="2796"/>
        <end position="2798"/>
    </location>
</feature>
<feature type="strand" evidence="41">
    <location>
        <begin position="2801"/>
        <end position="2805"/>
    </location>
</feature>
<comment type="function">
    <text evidence="2">Major high molecular weight protein of desmosomes. Regulates profibrotic gene expression in cardiomyocytes via activation of the MAPK14/p38 MAPK signaling cascade and increase in TGFB1 protein abundance (By similarity).</text>
</comment>
<comment type="subunit">
    <text evidence="1 6 8 12 22 23 25">Homodimer. Interacts with COL17A1 (via cytoplasmic region) (PubMed:12482924). Interacts with DSC2 (PubMed:21062920). Interacts with PKP2 (PubMed:11790773, PubMed:22781308). Interacts with PKP1 (PubMed:10852826, PubMed:11790773, PubMed:23444369). Interacts weakly with TMEM65.</text>
</comment>
<comment type="interaction">
    <interactant intactId="EBI-355041">
        <id>P15924</id>
    </interactant>
    <interactant intactId="EBI-1045757">
        <id>Q02413</id>
        <label>DSG1</label>
    </interactant>
    <organismsDiffer>false</organismsDiffer>
    <experiments>2</experiments>
</comment>
<comment type="interaction">
    <interactant intactId="EBI-355041">
        <id>P15924</id>
    </interactant>
    <interactant intactId="EBI-1055635">
        <id>P07332</id>
        <label>FES</label>
    </interactant>
    <organismsDiffer>false</organismsDiffer>
    <experiments>2</experiments>
</comment>
<comment type="interaction">
    <interactant intactId="EBI-355041">
        <id>P15924</id>
    </interactant>
    <interactant intactId="EBI-1004115">
        <id>Q15691</id>
        <label>MAPRE1</label>
    </interactant>
    <organismsDiffer>false</organismsDiffer>
    <experiments>7</experiments>
</comment>
<comment type="interaction">
    <interactant intactId="EBI-355041">
        <id>P15924</id>
    </interactant>
    <interactant intactId="EBI-9087684">
        <id>Q13835-2</id>
        <label>PKP1</label>
    </interactant>
    <organismsDiffer>false</organismsDiffer>
    <experiments>2</experiments>
</comment>
<comment type="subcellular location">
    <subcellularLocation>
        <location evidence="16 20 26">Cell junction</location>
        <location evidence="16 20 26">Desmosome</location>
    </subcellularLocation>
    <subcellularLocation>
        <location evidence="1">Cell membrane</location>
    </subcellularLocation>
    <subcellularLocation>
        <location evidence="26">Cytoplasm</location>
    </subcellularLocation>
    <text evidence="1 26">Localizes to desmosome precursor particles in the cytoplasm (PubMed:25208567). Localizes to the cytoplasm in undifferentiated keratinocytes however becomes localizes to both lateral and tricellular cell-cell contacts as differentiation progresses and as epithelial sheet formation completes (By similarity).</text>
</comment>
<comment type="alternative products">
    <event type="alternative splicing"/>
    <isoform>
        <id>P15924-1</id>
        <name>DPI</name>
        <name>DP1</name>
        <sequence type="displayed"/>
    </isoform>
    <isoform>
        <id>P15924-2</id>
        <name>DPII</name>
        <name>DP2</name>
        <sequence type="described" ref="VSP_005070"/>
    </isoform>
    <isoform>
        <id>P15924-3</id>
        <name>DSPIa</name>
        <sequence type="described" ref="VSP_053769"/>
    </isoform>
</comment>
<comment type="tissue specificity">
    <text evidence="17 27 28">Expressed in oral mucosa (at protein level) (PubMed:30479852). Expressed in arrector pili muscle (at protein level) (PubMed:29034528). Expressed in the heart in the heart (at protein level) (PubMed:18662195).</text>
</comment>
<comment type="tissue specificity">
    <molecule>Isoform DPI</molecule>
    <text>Apparently an obligate constituent of all desmosomes.</text>
</comment>
<comment type="tissue specificity">
    <molecule>Isoform DPII</molecule>
    <text>Resides predominantly in tissues and cells of stratified origin.</text>
</comment>
<comment type="domain">
    <text evidence="8">The N-terminal region is required for localization to the desmosomal plaque and interacts with the N-terminal region of PKP1.</text>
</comment>
<comment type="PTM">
    <text evidence="29">Phosphorylation at Ser-2849 increases association with intermediate filament cytokeratin, potentially facilitating interaction between desmosome junctions and intermediate filament architecture.</text>
</comment>
<comment type="disease" evidence="30">
    <disease id="DI-00896">
        <name>Keratoderma, palmoplantar, striate 2</name>
        <acronym>SPPK2</acronym>
        <description>A dermatological disorder characterized by thickening of the skin on the palms (linear pattern) and the soles (island-like pattern) and flexor aspect of the fingers. Abnormalities of the nails, the teeth and the hair are rarely present.</description>
        <dbReference type="MIM" id="612908"/>
    </disease>
    <text>The disease is caused by variants affecting the gene represented in this entry.</text>
</comment>
<comment type="disease" evidence="7 9 13">
    <disease id="DI-00230">
        <name>Cardiomyopathy, dilated, with woolly hair and keratoderma</name>
        <acronym>DCWHK</acronym>
        <description>An autosomal recessive cardiocutaneous syndrome characterized by a generalized striate keratoderma particularly affecting the palmoplantar epidermis, woolly hair, and dilated left ventricular cardiomyopathy.</description>
        <dbReference type="MIM" id="605676"/>
    </disease>
    <text>The disease is caused by variants affecting the gene represented in this entry.</text>
</comment>
<comment type="disease" evidence="11 14 19">
    <disease id="DI-01552">
        <name>Arrhythmogenic right ventricular dysplasia, familial, 8</name>
        <acronym>ARVD8</acronym>
        <description>A congenital heart disease characterized by infiltration of adipose and fibrous tissue into the right ventricle and loss of myocardial cells, resulting in ventricular and supraventricular arrhythmias.</description>
        <dbReference type="MIM" id="607450"/>
    </disease>
    <text>The disease is caused by variants affecting the gene represented in this entry.</text>
</comment>
<comment type="disease">
    <disease id="DI-00459">
        <name>Epidermolysis bullosa, lethal acantholytic</name>
        <acronym>EBLA</acronym>
        <description>A form of epidermolysis bullosa characterized by severe fragility of skin and mucous membranes. The phenotype is lethal in the neonatal period because of immense transcutaneous fluid loss. Typical features include universal alopecia, neonatal teeth, and nail loss. Histopathology of the skin shows suprabasal clefting and acantholysis throughout the spinous layer, mimicking pemphigus.</description>
        <dbReference type="MIM" id="609638"/>
    </disease>
    <text>The disease is caused by variants affecting the gene represented in this entry.</text>
</comment>
<comment type="disease" evidence="15 21 24">
    <disease id="DI-04267">
        <name>Cardiomyopathy, dilated, with woolly hair, keratoderma, and tooth agenesis</name>
        <acronym>DCWHKTA</acronym>
        <description>A cardiocutaneous syndrome characterized by biventricular dilated cardiomyopathy, hyperkeratosis, woolly hair, palmoplantar keratoderma, and hypo/oligodontia.</description>
        <dbReference type="MIM" id="615821"/>
    </disease>
    <text>The disease is caused by variants affecting the gene represented in this entry.</text>
</comment>
<comment type="miscellaneous">
    <molecule>Isoform DSPIa</molecule>
    <text evidence="33">Minor isoform.</text>
</comment>
<comment type="similarity">
    <text evidence="33">Belongs to the plakin or cytolinker family.</text>
</comment>
<comment type="online information" name="Wikipedia">
    <link uri="https://en.wikipedia.org/wiki/Desmoplakin"/>
    <text>Desmoplakin entry</text>
</comment>
<protein>
    <recommendedName>
        <fullName>Desmoplakin</fullName>
        <shortName>DP</shortName>
    </recommendedName>
    <alternativeName>
        <fullName>250/210 kDa paraneoplastic pemphigus antigen</fullName>
    </alternativeName>
</protein>
<sequence length="2871" mass="331774">MSCNGGSHPRINTLGRMIRAESGPDLRYEVTSGGGGTSRMYYSRRGVITDQNSDGYCQTGTMSRHQNQNTIQELLQNCSDCLMRAELIVQPELKYGDGIQLTRSRELDECFAQANDQMEILDSLIREMRQMGQPCDAYQKRLLQLQEQMRALYKAISVPRVRRASSKGGGGYTCQSGSGWDEFTKHVTSECLGWMRQQRAEMDMVAWGVDLASVEQHINSHRGIHNSIGDYRWQLDKIKADLREKSAIYQLEEEYENLLKASFERMDHLRQLQNIIQATSREIMWINDCEEEELLYDWSDKNTNIAQKQEAFSIRMSQLEVKEKELNKLKQESDQLVLNQHPASDKIEAYMDTLQTQWSWILQITKCIDVHLKENAAYFQFFEEAQSTEAYLKGLQDSIRKKYPCDKNMPLQHLLEQIKELEKEREKILEYKRQVQNLVNKSKKIVQLKPRNPDYRSNKPIILRALCDYKQDQKIVHKGDECILKDNNERSKWYVTGPGGVDMLVPSVGLIIPPPNPLAVDLSCKIEQYYEAILALWNQLYINMKSLVSWHYCMIDIEKIRAMTIAKLKTMRQEDYMKTIADLELHYQEFIRNSQGSEMFGDDDKRKIQSQFTDAQKHYQTLVIQLPGYPQHQTVTTTEITHHGTCQDVNHNKVIETNRENDKQETWMLMELQKIRRQIEHCEGRMTLKNLPLADQGSSHHITVKINELKSVQNDSQAIAEVLNQLKDMLANFRGSEKYCYLQNEVFGLFQKLENINGVTDGYLNSLCTVRALLQAILQTEDMLKVYEARLTEEETVCLDLDKVEAYRCGLKKIKNDLNLKKSLLATMKTELQKAQQIHSQTSQQYPLYDLDLGKFGEKVTQLTDRWQRIDKQIDFRLWDLEKQIKQLRNYRDNYQAFCKWLYDAKRRQDSLESMKFGDSNTVMRFLNEQKNLHSEISGKRDKSEEVQKIAELCANSIKDYELQLASYTSGLETLLNIPIKRTMIQSPSGVILQEAADVHARYIELLTRSGDYYRFLSEMLKSLEDLKLKNTKIEVLEEELRLARDANSENCNKNKFLDQNLQKYQAECSQFKAKLASLEELKRQAELDGKSAKQNLDKCYGQIKELNEKITRLTYEIEDEKRRRKSVEDRFDQQKNDYDQLQKARQCEKENLGWQKLESEKAIKEKEYEIERLRVLLQEEGTRKREYENELAKVRNHYNEEMSNLRNKYETEINITKTTIKEISMQKEDDSKNLRNQLDRLSRENRDLKDEIVRLNDSILQATEQRRRAEENALQQKACGSEIMQKKQHLEIELKQVMQQRSEDNARHKQSLEEAAKTIQDKNKEIERLKAEFQEEAKRRWEYENELSKVRNNYDEEIISLKNQFETEINITKTTIHQLTMQKEEDTSGYRAQIDNLTRENRSLSEEIKRLKNTLTQTTENLRRVEEDIQQQKATGSEVSQRKQQLEVELRQVTQMRTEESVRYKQSLDDAAKTIQDKNKEIERLKQLIDKETNDRKCLEDENARLQRVQYDLQKANSSATETINKLKVQEQELTRLRIDYERVSQERTVKDQDITRFQNSLKELQLQKQKVEEELNRLKRTASEDSCKRKKLEEELEGMRRSLKEQAIKITNLTQQLEQASIVKKRSEDDLRQQRDVLDGHLREKQRTQEELRRLSSEVEALRRQLLQEQESVKQAHLRNEHFQKAIEDKSRSLNESKIEIERLQSLTENLTKEHLMLEEELRNLRLEYDDLRRGRSEADSDKNATILELRSQLQISNNRTLELQGLINDLQRERENLRQEIEKFQKQALEASNRIQESKNQCTQVVQERESLLVKIKVLEQDKARLQRLEDELNRAKSTLEAETRVKQRLECEKQQIQNDLNQWKTQYSRKEEAIRKIESEREKSEREKNSLRSEIERLQAEIKRIEERCRRKLEDSTRETQSQLETERSRYQREIDKLRQRPYGSHRETQTECEWTVDTSKLVFDGLRKKVTAMQLYECQLIDKTTLDKLLKGKKSVEEVASEIQPFLRGAGSIAGASASPKEKYSLVEAKRKKLISPESTVMLLEAQAATGGIIDPHRNEKLTVDSAIARDLIDFDDRQQIYAAEKAITGFDDPFSGKTVSVSEAIKKNLIDRETGMRLLEAQIASGGVVDPVNSVFLPKDVALARGLIDRDLYRSLNDPRDSQKNFVDPVTKKKVSYVQLKERCRIEPHTGLLLLSVQKRSMSFQGIRQPVTVTELVDSGILRPSTVNELESGQISYDEVGERIKDFLQGSSCIAGIYNETTKQKLGIYEAMKIGLVRPGTALELLEAQAATGFIVDPVSNLRLPVEEAYKRGLVGIEFKEKLLSAERAVTGYNDPETGNIISLFQAMNKELIEKGHGIRLLEAQIATGGIIDPKESHRLPVDIAYKRGYFNEELSEILSDPSDDTKGFFDPNTEENLTYLQLKERCIKDEETGLCLLPLKEKKKQVQTSQKNTLRKRRVVIVDPETNKEMSVQEAYKKGLIDYETFKELCEQECEWEEITITGSDGSTRVVLVDRKTGSQYDIQDAIDKGLVDRKFFDQYRSGSLSLTQFADMISLKNGVGTSSSMGSGVSDDVFSSSRHESVSKISTISSVRNLTIRSSSFSDTLEESSPIAAIFDTENLEKISITEGIERGIVDSITGQRLLEAQACTGGIIHPTTGQKLSLQDAVSQGVIDQDMATRLKPAQKAFIGFEGVKGKKKMSAAEAVKEKWLPYEAGQRFLEFQYLTGGLVDPEVHGRISTEEAIRKGFIDGRAAQRLQDTSSYAKILTCPKTKLKISYKDAINRSMVEDITGLRLLEAASVSSKGLPSPYNMSSAPGSRSGSRSGSRSGSRSGSRSGSRRGSFDATGNSSYSYSYSFSSSSIGH</sequence>
<reference key="1">
    <citation type="journal article" date="1992" name="Proc. Natl. Acad. Sci. U.S.A.">
        <title>Molecular structure of the human desmoplakin I and II amino terminus.</title>
        <authorList>
            <person name="Virata M.L.A."/>
            <person name="Wagner R.M."/>
            <person name="Parry D.A.D."/>
            <person name="Green K.J."/>
        </authorList>
    </citation>
    <scope>NUCLEOTIDE SEQUENCE [MRNA] (ISOFORM DPI)</scope>
    <source>
        <tissue>Foreskin</tissue>
    </source>
</reference>
<reference key="2">
    <citation type="journal article" date="2010" name="Cell Tissue Res.">
        <title>Identification and characterization of DSPIa, a novel isoform of human desmoplakin.</title>
        <authorList>
            <person name="Cabral R.M."/>
            <person name="Wan H."/>
            <person name="Cole C.L."/>
            <person name="Abrams D.J."/>
            <person name="Kelsell D.P."/>
            <person name="South A.P."/>
        </authorList>
    </citation>
    <scope>NUCLEOTIDE SEQUENCE [MRNA] (ISOFORM DSPIA)</scope>
</reference>
<reference key="3">
    <citation type="journal article" date="2003" name="Nature">
        <title>The DNA sequence and analysis of human chromosome 6.</title>
        <authorList>
            <person name="Mungall A.J."/>
            <person name="Palmer S.A."/>
            <person name="Sims S.K."/>
            <person name="Edwards C.A."/>
            <person name="Ashurst J.L."/>
            <person name="Wilming L."/>
            <person name="Jones M.C."/>
            <person name="Horton R."/>
            <person name="Hunt S.E."/>
            <person name="Scott C.E."/>
            <person name="Gilbert J.G.R."/>
            <person name="Clamp M.E."/>
            <person name="Bethel G."/>
            <person name="Milne S."/>
            <person name="Ainscough R."/>
            <person name="Almeida J.P."/>
            <person name="Ambrose K.D."/>
            <person name="Andrews T.D."/>
            <person name="Ashwell R.I.S."/>
            <person name="Babbage A.K."/>
            <person name="Bagguley C.L."/>
            <person name="Bailey J."/>
            <person name="Banerjee R."/>
            <person name="Barker D.J."/>
            <person name="Barlow K.F."/>
            <person name="Bates K."/>
            <person name="Beare D.M."/>
            <person name="Beasley H."/>
            <person name="Beasley O."/>
            <person name="Bird C.P."/>
            <person name="Blakey S.E."/>
            <person name="Bray-Allen S."/>
            <person name="Brook J."/>
            <person name="Brown A.J."/>
            <person name="Brown J.Y."/>
            <person name="Burford D.C."/>
            <person name="Burrill W."/>
            <person name="Burton J."/>
            <person name="Carder C."/>
            <person name="Carter N.P."/>
            <person name="Chapman J.C."/>
            <person name="Clark S.Y."/>
            <person name="Clark G."/>
            <person name="Clee C.M."/>
            <person name="Clegg S."/>
            <person name="Cobley V."/>
            <person name="Collier R.E."/>
            <person name="Collins J.E."/>
            <person name="Colman L.K."/>
            <person name="Corby N.R."/>
            <person name="Coville G.J."/>
            <person name="Culley K.M."/>
            <person name="Dhami P."/>
            <person name="Davies J."/>
            <person name="Dunn M."/>
            <person name="Earthrowl M.E."/>
            <person name="Ellington A.E."/>
            <person name="Evans K.A."/>
            <person name="Faulkner L."/>
            <person name="Francis M.D."/>
            <person name="Frankish A."/>
            <person name="Frankland J."/>
            <person name="French L."/>
            <person name="Garner P."/>
            <person name="Garnett J."/>
            <person name="Ghori M.J."/>
            <person name="Gilby L.M."/>
            <person name="Gillson C.J."/>
            <person name="Glithero R.J."/>
            <person name="Grafham D.V."/>
            <person name="Grant M."/>
            <person name="Gribble S."/>
            <person name="Griffiths C."/>
            <person name="Griffiths M.N.D."/>
            <person name="Hall R."/>
            <person name="Halls K.S."/>
            <person name="Hammond S."/>
            <person name="Harley J.L."/>
            <person name="Hart E.A."/>
            <person name="Heath P.D."/>
            <person name="Heathcott R."/>
            <person name="Holmes S.J."/>
            <person name="Howden P.J."/>
            <person name="Howe K.L."/>
            <person name="Howell G.R."/>
            <person name="Huckle E."/>
            <person name="Humphray S.J."/>
            <person name="Humphries M.D."/>
            <person name="Hunt A.R."/>
            <person name="Johnson C.M."/>
            <person name="Joy A.A."/>
            <person name="Kay M."/>
            <person name="Keenan S.J."/>
            <person name="Kimberley A.M."/>
            <person name="King A."/>
            <person name="Laird G.K."/>
            <person name="Langford C."/>
            <person name="Lawlor S."/>
            <person name="Leongamornlert D.A."/>
            <person name="Leversha M."/>
            <person name="Lloyd C.R."/>
            <person name="Lloyd D.M."/>
            <person name="Loveland J.E."/>
            <person name="Lovell J."/>
            <person name="Martin S."/>
            <person name="Mashreghi-Mohammadi M."/>
            <person name="Maslen G.L."/>
            <person name="Matthews L."/>
            <person name="McCann O.T."/>
            <person name="McLaren S.J."/>
            <person name="McLay K."/>
            <person name="McMurray A."/>
            <person name="Moore M.J.F."/>
            <person name="Mullikin J.C."/>
            <person name="Niblett D."/>
            <person name="Nickerson T."/>
            <person name="Novik K.L."/>
            <person name="Oliver K."/>
            <person name="Overton-Larty E.K."/>
            <person name="Parker A."/>
            <person name="Patel R."/>
            <person name="Pearce A.V."/>
            <person name="Peck A.I."/>
            <person name="Phillimore B.J.C.T."/>
            <person name="Phillips S."/>
            <person name="Plumb R.W."/>
            <person name="Porter K.M."/>
            <person name="Ramsey Y."/>
            <person name="Ranby S.A."/>
            <person name="Rice C.M."/>
            <person name="Ross M.T."/>
            <person name="Searle S.M."/>
            <person name="Sehra H.K."/>
            <person name="Sheridan E."/>
            <person name="Skuce C.D."/>
            <person name="Smith S."/>
            <person name="Smith M."/>
            <person name="Spraggon L."/>
            <person name="Squares S.L."/>
            <person name="Steward C.A."/>
            <person name="Sycamore N."/>
            <person name="Tamlyn-Hall G."/>
            <person name="Tester J."/>
            <person name="Theaker A.J."/>
            <person name="Thomas D.W."/>
            <person name="Thorpe A."/>
            <person name="Tracey A."/>
            <person name="Tromans A."/>
            <person name="Tubby B."/>
            <person name="Wall M."/>
            <person name="Wallis J.M."/>
            <person name="West A.P."/>
            <person name="White S.S."/>
            <person name="Whitehead S.L."/>
            <person name="Whittaker H."/>
            <person name="Wild A."/>
            <person name="Willey D.J."/>
            <person name="Wilmer T.E."/>
            <person name="Wood J.M."/>
            <person name="Wray P.W."/>
            <person name="Wyatt J.C."/>
            <person name="Young L."/>
            <person name="Younger R.M."/>
            <person name="Bentley D.R."/>
            <person name="Coulson A."/>
            <person name="Durbin R.M."/>
            <person name="Hubbard T."/>
            <person name="Sulston J.E."/>
            <person name="Dunham I."/>
            <person name="Rogers J."/>
            <person name="Beck S."/>
        </authorList>
    </citation>
    <scope>NUCLEOTIDE SEQUENCE [LARGE SCALE GENOMIC DNA]</scope>
</reference>
<reference key="4">
    <citation type="journal article" date="2004" name="Genome Res.">
        <title>The status, quality, and expansion of the NIH full-length cDNA project: the Mammalian Gene Collection (MGC).</title>
        <authorList>
            <consortium name="The MGC Project Team"/>
        </authorList>
    </citation>
    <scope>NUCLEOTIDE SEQUENCE [LARGE SCALE MRNA] (ISOFORM DPII)</scope>
</reference>
<reference key="5">
    <citation type="journal article" date="1990" name="J. Biol. Chem.">
        <title>Structure of the human desmoplakins. Implications for function in the desmosomal plaque.</title>
        <authorList>
            <person name="Green K.J."/>
            <person name="Parry D.A.D."/>
            <person name="Steinert P.M."/>
            <person name="Virata M.L.A."/>
            <person name="Wagner R.M."/>
            <person name="Angst B.D."/>
            <person name="Nilles L.A."/>
        </authorList>
    </citation>
    <scope>NUCLEOTIDE SEQUENCE [MRNA] OF 1120-2871 (ISOFORM DPI)</scope>
    <source>
        <tissue>Foreskin</tissue>
    </source>
</reference>
<reference key="6">
    <citation type="journal article" date="1990" name="J. Biol. Chem.">
        <authorList>
            <person name="Green K.J."/>
            <person name="Parry D.A.D."/>
            <person name="Steinert P.M."/>
            <person name="Virata M.L.A."/>
            <person name="Wagner R.M."/>
            <person name="Angst B.D."/>
            <person name="Nilles L.A."/>
        </authorList>
    </citation>
    <scope>ERRATUM OF PUBMED:1689290</scope>
</reference>
<reference key="7">
    <citation type="journal article" date="1999" name="J. Invest. Dermatol.">
        <title>Striate palmoplantar keratoderma resulting from desmoplakin haploinsufficiency.</title>
        <authorList>
            <person name="Whittock N.V."/>
            <person name="Ashton G.H."/>
            <person name="Dopping-Hepenstal P.J."/>
            <person name="Gratian M.J."/>
            <person name="Keane F.M."/>
            <person name="Eady R.A.J."/>
            <person name="McGrath J.A."/>
        </authorList>
    </citation>
    <scope>NUCLEOTIDE SEQUENCE [MRNA] OF 2854-2871</scope>
    <source>
        <tissue>Skin</tissue>
    </source>
</reference>
<reference key="8">
    <citation type="journal article" date="1997" name="J. Cell Biol.">
        <title>The amino-terminal domain of desmoplakin binds to plakoglobin and clusters desmosomal cadherin-plakoglobin complexes.</title>
        <authorList>
            <person name="Kowalczyk A.P."/>
            <person name="Bornslaeger E.A."/>
            <person name="Borgwardt J.E."/>
            <person name="Palka H.L."/>
            <person name="Dhaliwal A.S."/>
            <person name="Corcoran C.M."/>
            <person name="Denning M.F."/>
            <person name="Green K.J."/>
        </authorList>
    </citation>
    <scope>CHARACTERIZATION</scope>
</reference>
<reference key="9">
    <citation type="journal article" date="1999" name="Hum. Mol. Genet.">
        <title>Haploinsufficiency of desmoplakin causes a striate subtype of palmoplantar keratoderma.</title>
        <authorList>
            <person name="Armstrong D.K."/>
            <person name="McKenna K.E."/>
            <person name="Purkis P.E."/>
            <person name="Green K.J."/>
            <person name="Eady R.A.J."/>
            <person name="Leigh I.M."/>
            <person name="Hughes A.E."/>
        </authorList>
    </citation>
    <scope>INVOLVEMENT IN SPPK2</scope>
</reference>
<reference key="10">
    <citation type="journal article" date="1999" name="Hum. Mol. Genet.">
        <authorList>
            <person name="Armstrong D.K."/>
            <person name="McKenna K.E."/>
            <person name="Purkis P.E."/>
            <person name="Green K.J."/>
            <person name="Eady R.A.J."/>
            <person name="Leigh I.M."/>
            <person name="Hughes A.E."/>
        </authorList>
    </citation>
    <scope>ERRATUM OF PUBMED:9887343</scope>
</reference>
<reference key="11">
    <citation type="journal article" date="2000" name="Hum. Mol. Genet.">
        <title>Recessive mutation in desmoplakin disrupts desmoplakin-intermediate filament interactions and causes dilated cardiomyopathy, woolly hair and keratoderma.</title>
        <authorList>
            <person name="Norgett E.E."/>
            <person name="Hatsell S.J."/>
            <person name="Carvajal-Huerta L."/>
            <person name="Cabezas J.-C.R."/>
            <person name="Common J."/>
            <person name="Purkis P.E."/>
            <person name="Whittock N.V."/>
            <person name="Leigh I.M."/>
            <person name="Stevens H.P."/>
            <person name="Kelsell D.P."/>
        </authorList>
    </citation>
    <scope>INVOLVEMENT IN DCWHK</scope>
</reference>
<reference key="12">
    <citation type="journal article" date="2000" name="J. Cell Sci.">
        <title>Interaction of plakophilins with desmoplakin and intermediate filament proteins: an in vitro analysis.</title>
        <authorList>
            <person name="Hofmann I."/>
            <person name="Mertens C."/>
            <person name="Brettel M."/>
            <person name="Nimmrich V."/>
            <person name="Schnoelzer M."/>
            <person name="Herrmann H."/>
        </authorList>
    </citation>
    <scope>INTERACTION WITH PKP1</scope>
</reference>
<reference key="13">
    <citation type="journal article" date="2002" name="J. Biol. Chem.">
        <title>Protein binding and functional characterization of plakophilin 2. Evidence for its diverse roles in desmosomes and beta -catenin signaling.</title>
        <authorList>
            <person name="Chen X."/>
            <person name="Bonne S."/>
            <person name="Hatzfeld M."/>
            <person name="van Roy F."/>
            <person name="Green K.J."/>
        </authorList>
    </citation>
    <scope>INTERACTION WITH PKP1 AND PKP2</scope>
    <scope>DOMAIN</scope>
</reference>
<reference key="14">
    <citation type="journal article" date="2003" name="J. Cell Sci.">
        <title>Analysis of the interactions between BP180, BP230, plectin and the integrin alpha6beta4 important for hemidesmosome assembly.</title>
        <authorList>
            <person name="Koster J."/>
            <person name="Geerts D."/>
            <person name="Favre B."/>
            <person name="Borradori L."/>
            <person name="Sonnenberg A."/>
        </authorList>
    </citation>
    <scope>INTERACTION WITH COL17A1</scope>
</reference>
<reference key="15">
    <citation type="journal article" date="2006" name="J. Invest. Dermatol.">
        <title>Early death from cardiomyopathy in a family with autosomal dominant striate palmoplantar keratoderma and woolly hair associated with a novel insertion mutation in desmoplakin.</title>
        <authorList>
            <person name="Norgett E.E."/>
            <person name="Lucke T.W."/>
            <person name="Bowers B."/>
            <person name="Munro C.S."/>
            <person name="Leigh I.M."/>
            <person name="Kelsell D.P."/>
        </authorList>
    </citation>
    <scope>INVOLVEMENT IN DCWHKTA</scope>
</reference>
<reference key="16">
    <citation type="journal article" date="2008" name="Exp. Cell Res.">
        <title>P120-catenin is a novel desmoglein 3 interacting partner: identification of the p120-catenin association site of desmoglein 3.</title>
        <authorList>
            <person name="Kanno M."/>
            <person name="Isa Y."/>
            <person name="Aoyama Y."/>
            <person name="Yamamoto Y."/>
            <person name="Nagai M."/>
            <person name="Ozawa M."/>
            <person name="Kitajima Y."/>
        </authorList>
    </citation>
    <scope>SUBCELLULAR LOCATION</scope>
</reference>
<reference key="17">
    <citation type="journal article" date="2008" name="J. Proteome Res.">
        <title>Combining protein-based IMAC, peptide-based IMAC, and MudPIT for efficient phosphoproteomic analysis.</title>
        <authorList>
            <person name="Cantin G.T."/>
            <person name="Yi W."/>
            <person name="Lu B."/>
            <person name="Park S.K."/>
            <person name="Xu T."/>
            <person name="Lee J.-D."/>
            <person name="Yates J.R. III"/>
        </authorList>
    </citation>
    <scope>PHOSPHORYLATION [LARGE SCALE ANALYSIS] AT SER-2825</scope>
    <scope>IDENTIFICATION BY MASS SPECTROMETRY [LARGE SCALE ANALYSIS]</scope>
    <source>
        <tissue>Cervix carcinoma</tissue>
    </source>
</reference>
<reference key="18">
    <citation type="journal article" date="2008" name="Mol. Cell">
        <title>Kinase-selective enrichment enables quantitative phosphoproteomics of the kinome across the cell cycle.</title>
        <authorList>
            <person name="Daub H."/>
            <person name="Olsen J.V."/>
            <person name="Bairlein M."/>
            <person name="Gnad F."/>
            <person name="Oppermann F.S."/>
            <person name="Korner R."/>
            <person name="Greff Z."/>
            <person name="Keri G."/>
            <person name="Stemmann O."/>
            <person name="Mann M."/>
        </authorList>
    </citation>
    <scope>IDENTIFICATION BY MASS SPECTROMETRY [LARGE SCALE ANALYSIS]</scope>
    <source>
        <tissue>Cervix carcinoma</tissue>
    </source>
</reference>
<reference key="19">
    <citation type="journal article" date="2008" name="Proc. Natl. Acad. Sci. U.S.A.">
        <title>A quantitative atlas of mitotic phosphorylation.</title>
        <authorList>
            <person name="Dephoure N."/>
            <person name="Zhou C."/>
            <person name="Villen J."/>
            <person name="Beausoleil S.A."/>
            <person name="Bakalarski C.E."/>
            <person name="Elledge S.J."/>
            <person name="Gygi S.P."/>
        </authorList>
    </citation>
    <scope>PHOSPHORYLATION [LARGE SCALE ANALYSIS] AT SER-165; SER-166; SER-176; SER-2024; SER-2209; SER-2815; SER-2821; SER-2825; SER-2849; THR-2853 AND SER-2868</scope>
    <scope>IDENTIFICATION BY MASS SPECTROMETRY [LARGE SCALE ANALYSIS]</scope>
    <source>
        <tissue>Cervix carcinoma</tissue>
    </source>
</reference>
<reference key="20">
    <citation type="journal article" date="2009" name="Anal. Chem.">
        <title>Lys-N and trypsin cover complementary parts of the phosphoproteome in a refined SCX-based approach.</title>
        <authorList>
            <person name="Gauci S."/>
            <person name="Helbig A.O."/>
            <person name="Slijper M."/>
            <person name="Krijgsveld J."/>
            <person name="Heck A.J."/>
            <person name="Mohammed S."/>
        </authorList>
    </citation>
    <scope>IDENTIFICATION BY MASS SPECTROMETRY [LARGE SCALE ANALYSIS]</scope>
</reference>
<reference key="21">
    <citation type="journal article" date="2009" name="J. Cell. Mol. Med.">
        <title>Abnormal connexin43 in arrhythmogenic right ventricular cardiomyopathy caused by plakophilin-2 mutations.</title>
        <authorList>
            <person name="Fidler L.M."/>
            <person name="Wilson G.J."/>
            <person name="Liu F."/>
            <person name="Cui X."/>
            <person name="Scherer S.W."/>
            <person name="Taylor G.P."/>
            <person name="Hamilton R.M."/>
        </authorList>
    </citation>
    <scope>TISSUE SPECIFICITY</scope>
</reference>
<reference key="22">
    <citation type="journal article" date="2009" name="Mol. Cell. Proteomics">
        <title>Large-scale proteomics analysis of the human kinome.</title>
        <authorList>
            <person name="Oppermann F.S."/>
            <person name="Gnad F."/>
            <person name="Olsen J.V."/>
            <person name="Hornberger R."/>
            <person name="Greff Z."/>
            <person name="Keri G."/>
            <person name="Mann M."/>
            <person name="Daub H."/>
        </authorList>
    </citation>
    <scope>IDENTIFICATION BY MASS SPECTROMETRY [LARGE SCALE ANALYSIS]</scope>
</reference>
<reference key="23">
    <citation type="journal article" date="2009" name="Sci. Signal.">
        <title>Quantitative phosphoproteomic analysis of T cell receptor signaling reveals system-wide modulation of protein-protein interactions.</title>
        <authorList>
            <person name="Mayya V."/>
            <person name="Lundgren D.H."/>
            <person name="Hwang S.-I."/>
            <person name="Rezaul K."/>
            <person name="Wu L."/>
            <person name="Eng J.K."/>
            <person name="Rodionov V."/>
            <person name="Han D.K."/>
        </authorList>
    </citation>
    <scope>IDENTIFICATION BY MASS SPECTROMETRY [LARGE SCALE ANALYSIS]</scope>
    <source>
        <tissue>Leukemic T-cell</tissue>
    </source>
</reference>
<reference key="24">
    <citation type="journal article" date="2010" name="Sci. Signal.">
        <title>Quantitative phosphoproteomics reveals widespread full phosphorylation site occupancy during mitosis.</title>
        <authorList>
            <person name="Olsen J.V."/>
            <person name="Vermeulen M."/>
            <person name="Santamaria A."/>
            <person name="Kumar C."/>
            <person name="Miller M.L."/>
            <person name="Jensen L.J."/>
            <person name="Gnad F."/>
            <person name="Cox J."/>
            <person name="Jensen T.S."/>
            <person name="Nigg E.A."/>
            <person name="Brunak S."/>
            <person name="Mann M."/>
        </authorList>
    </citation>
    <scope>PHOSPHORYLATION [LARGE SCALE ANALYSIS] AT SER-2024; SER-2207; SER-2209; SER-2815 AND SER-2825</scope>
    <scope>IDENTIFICATION BY MASS SPECTROMETRY [LARGE SCALE ANALYSIS]</scope>
    <source>
        <tissue>Cervix carcinoma</tissue>
    </source>
</reference>
<reference key="25">
    <citation type="journal article" date="2011" name="BMC Syst. Biol.">
        <title>Initial characterization of the human central proteome.</title>
        <authorList>
            <person name="Burkard T.R."/>
            <person name="Planyavsky M."/>
            <person name="Kaupe I."/>
            <person name="Breitwieser F.P."/>
            <person name="Buerckstuemmer T."/>
            <person name="Bennett K.L."/>
            <person name="Superti-Furga G."/>
            <person name="Colinge J."/>
        </authorList>
    </citation>
    <scope>IDENTIFICATION BY MASS SPECTROMETRY [LARGE SCALE ANALYSIS]</scope>
</reference>
<reference key="26">
    <citation type="journal article" date="2011" name="Cardiovasc. Res.">
        <title>Mechanistic insights into arrhythmogenic right ventricular cardiomyopathy caused by desmocollin-2 mutations.</title>
        <authorList>
            <person name="Gehmlich K."/>
            <person name="Syrris P."/>
            <person name="Peskett E."/>
            <person name="Evans A."/>
            <person name="Ehler E."/>
            <person name="Asimaki A."/>
            <person name="Anastasakis A."/>
            <person name="Tsatsopoulou A."/>
            <person name="Vouliotis A.I."/>
            <person name="Stefanadis C."/>
            <person name="Saffitz J.E."/>
            <person name="Protonotarios N."/>
            <person name="McKenna W.J."/>
        </authorList>
    </citation>
    <scope>INTERACTION WITH DSC2</scope>
    <scope>VARIANT VAL-1833</scope>
</reference>
<reference key="27">
    <citation type="journal article" date="2011" name="Cell. Mol. Life Sci.">
        <title>E-cadherin and plakoglobin recruit plakophilin3 to the cell border to initiate desmosome assembly.</title>
        <authorList>
            <person name="Gosavi P."/>
            <person name="Kundu S.T."/>
            <person name="Khapare N."/>
            <person name="Sehgal L."/>
            <person name="Karkhanis M.S."/>
            <person name="Dalal S.N."/>
        </authorList>
    </citation>
    <scope>SUBCELLULAR LOCATION</scope>
</reference>
<reference key="28">
    <citation type="journal article" date="2011" name="J. Dent. Res.">
        <title>A new hypo/oligodontia syndrome: Carvajal/Naxos syndrome secondary to desmoplakin-dominant mutations.</title>
        <authorList>
            <person name="Chalabreysse L."/>
            <person name="Senni F."/>
            <person name="Bruyere P."/>
            <person name="Aime B."/>
            <person name="Ollagnier C."/>
            <person name="Bozio A."/>
            <person name="Bouvagnet P."/>
        </authorList>
    </citation>
    <scope>INVOLVEMENT IN DCWHKTA</scope>
    <scope>VARIANT DCWHKTA LEU-597</scope>
</reference>
<reference key="29">
    <citation type="journal article" date="2011" name="Sci. Signal.">
        <title>System-wide temporal characterization of the proteome and phosphoproteome of human embryonic stem cell differentiation.</title>
        <authorList>
            <person name="Rigbolt K.T."/>
            <person name="Prokhorova T.A."/>
            <person name="Akimov V."/>
            <person name="Henningsen J."/>
            <person name="Johansen P.T."/>
            <person name="Kratchmarova I."/>
            <person name="Kassem M."/>
            <person name="Mann M."/>
            <person name="Olsen J.V."/>
            <person name="Blagoev B."/>
        </authorList>
    </citation>
    <scope>PHOSPHORYLATION [LARGE SCALE ANALYSIS] AT SER-22; SER-2209; SER-2820 AND SER-2825</scope>
    <scope>IDENTIFICATION BY MASS SPECTROMETRY [LARGE SCALE ANALYSIS]</scope>
</reference>
<reference key="30">
    <citation type="journal article" date="2012" name="Circ. Cardiovasc. Genet.">
        <title>Molecular insights into arrhythmogenic right ventricular cardiomyopathy caused by plakophilin-2 missense mutations.</title>
        <authorList>
            <person name="Kirchner F."/>
            <person name="Schuetz A."/>
            <person name="Boldt L.H."/>
            <person name="Martens K."/>
            <person name="Dittmar G."/>
            <person name="Haverkamp W."/>
            <person name="Thierfelder L."/>
            <person name="Heinemann U."/>
            <person name="Gerull B."/>
        </authorList>
    </citation>
    <scope>INTERACTION WITH PKP2</scope>
</reference>
<reference key="31">
    <citation type="journal article" date="2013" name="J. Cell Sci.">
        <title>Insulin signaling via Akt2 switches plakophilin 1 function from stabilizing cell adhesion to promoting cell proliferation.</title>
        <authorList>
            <person name="Wolf A."/>
            <person name="Rietscher K."/>
            <person name="Glass M."/>
            <person name="Huettelmaier S."/>
            <person name="Schutkowski M."/>
            <person name="Ihling C."/>
            <person name="Sinz A."/>
            <person name="Wingenfeld A."/>
            <person name="Mun A."/>
            <person name="Hatzfeld M."/>
        </authorList>
    </citation>
    <scope>INTERACTION WITH PKP1</scope>
</reference>
<reference key="32">
    <citation type="journal article" date="2013" name="J. Proteome Res.">
        <title>Toward a comprehensive characterization of a human cancer cell phosphoproteome.</title>
        <authorList>
            <person name="Zhou H."/>
            <person name="Di Palma S."/>
            <person name="Preisinger C."/>
            <person name="Peng M."/>
            <person name="Polat A.N."/>
            <person name="Heck A.J."/>
            <person name="Mohammed S."/>
        </authorList>
    </citation>
    <scope>PHOSPHORYLATION [LARGE SCALE ANALYSIS] AT SER-22; SER-165; SER-1658; SER-1708; SER-2024; SER-2209; SER-2810; TYR-2817; SER-2820 AND SER-2825</scope>
    <scope>IDENTIFICATION BY MASS SPECTROMETRY [LARGE SCALE ANALYSIS]</scope>
    <source>
        <tissue>Cervix carcinoma</tissue>
    </source>
</reference>
<reference key="33">
    <citation type="journal article" date="2014" name="J. Proteomics">
        <title>An enzyme assisted RP-RPLC approach for in-depth analysis of human liver phosphoproteome.</title>
        <authorList>
            <person name="Bian Y."/>
            <person name="Song C."/>
            <person name="Cheng K."/>
            <person name="Dong M."/>
            <person name="Wang F."/>
            <person name="Huang J."/>
            <person name="Sun D."/>
            <person name="Wang L."/>
            <person name="Ye M."/>
            <person name="Zou H."/>
        </authorList>
    </citation>
    <scope>PHOSPHORYLATION [LARGE SCALE ANALYSIS] AT SER-22; SER-53; SER-165; SER-166; SER-1708; SER-2209 AND SER-2225</scope>
    <scope>IDENTIFICATION BY MASS SPECTROMETRY [LARGE SCALE ANALYSIS]</scope>
    <source>
        <tissue>Liver</tissue>
    </source>
</reference>
<reference key="34">
    <citation type="journal article" date="2014" name="Mol. Biol. Cell">
        <title>Plakophilin 3 mediates Rap1-dependent desmosome assembly and adherens junction maturation.</title>
        <authorList>
            <person name="Todorovic V."/>
            <person name="Koetsier J.L."/>
            <person name="Godsel L.M."/>
            <person name="Green K.J."/>
        </authorList>
    </citation>
    <scope>SUBCELLULAR LOCATION</scope>
</reference>
<reference key="35">
    <citation type="journal article" date="2017" name="Clin. Exp. Dermatol.">
        <title>Patients with a new variant of endemic pemphigus foliaceus have autoantibodies against arrector pili muscle, colocalizing with MYZAP, p0071, desmoplakins 1 and 2 and ARVCF.</title>
        <authorList>
            <person name="Abreu-Velez A.M."/>
            <person name="Valencia-Yepes C.A."/>
            <person name="Upegui-Zapata Y.A."/>
            <person name="Upegui-Quiceno E."/>
            <person name="Mesa-Herrera N.R."/>
            <person name="Velazquez-Velez J.E."/>
            <person name="Howard M.S."/>
        </authorList>
    </citation>
    <scope>TISSUE SPECIFICITY</scope>
</reference>
<reference key="36">
    <citation type="journal article" date="2018" name="Dermatol. Pract. Concept.">
        <title>Subclinical oral involvement in patients with endemic pemphigus foliaceus.</title>
        <authorList>
            <person name="Abreu-Velez A.M."/>
            <person name="Howard M.S."/>
            <person name="Padilla H.J.L."/>
            <person name="Tobon-Arroyave S."/>
        </authorList>
    </citation>
    <scope>TISSUE SPECIFICITY</scope>
</reference>
<reference key="37">
    <citation type="journal article" date="2021" name="Mol. Biol. Cell">
        <title>Regulation of intestinal epithelial intercellular adhesion and barrier function by desmosomal cadherin desmocollin-2.</title>
        <authorList>
            <person name="Raya-Sandino A."/>
            <person name="Luissint A.C."/>
            <person name="Kusters D.H.M."/>
            <person name="Narayanan V."/>
            <person name="Flemming S."/>
            <person name="Garcia-Hernandez V."/>
            <person name="Godsel L.M."/>
            <person name="Green K.J."/>
            <person name="Hagen S.J."/>
            <person name="Conway D.E."/>
            <person name="Parkos C.A."/>
            <person name="Nusrat A."/>
        </authorList>
    </citation>
    <scope>PHOSPHORYLATION AT SER-2849</scope>
</reference>
<reference key="38">
    <citation type="journal article" date="2002" name="Nat. Struct. Biol.">
        <title>Structures of two intermediate filament-binding fragments of desmoplakin reveal a unique repeat motif structure.</title>
        <authorList>
            <person name="Choi H.J."/>
            <person name="Park-Snyder S."/>
            <person name="Pascoe L.T."/>
            <person name="Green K.J."/>
            <person name="Weis W.I."/>
        </authorList>
    </citation>
    <scope>X-RAY CRYSTALLOGRAPHY (3.0 ANGSTROMS) OF 2209-2456</scope>
    <scope>X-RAY CRYSTALLOGRAPHY (1.8 ANGSTROMS) OF 2609-2822</scope>
    <scope>DOMAIN PLAKIN REPEATS</scope>
</reference>
<reference key="39">
    <citation type="journal article" date="2011" name="J. Mol. Biol.">
        <title>Crystal structure of a rigid four-spectrin-repeat fragment of the human desmoplakin plakin domain.</title>
        <authorList>
            <person name="Choi H.J."/>
            <person name="Weis W.I."/>
        </authorList>
    </citation>
    <scope>X-RAY CRYSTALLOGRAPHY (2.95 ANGSTROMS) OF 178-627</scope>
    <scope>DOMAIN SPECTRIN REPEATS</scope>
    <scope>DOMAIN SH3</scope>
</reference>
<reference evidence="34" key="40">
    <citation type="journal article" date="2016" name="PLoS ONE">
        <title>Structure of the Intermediate Filament-Binding Region of Desmoplakin.</title>
        <authorList>
            <person name="Kang H."/>
            <person name="Weiss T.M."/>
            <person name="Bang I."/>
            <person name="Weis W.I."/>
            <person name="Choi H.J."/>
        </authorList>
    </citation>
    <scope>X-RAY CRYSTALLOGRAPHY (2.60 ANGSTROMS) OF 1960-2448</scope>
</reference>
<reference key="41">
    <citation type="journal article" date="2002" name="Am. J. Hum. Genet.">
        <title>Mutation in human desmoplakin domain binding to plakoglobin causes a dominant form of arrhythmogenic right ventricular cardiomyopathy.</title>
        <authorList>
            <person name="Rampazzo A."/>
            <person name="Nava A."/>
            <person name="Malacrida S."/>
            <person name="Beffagna G."/>
            <person name="Bauce B."/>
            <person name="Rossi V."/>
            <person name="Zimbello R."/>
            <person name="Simionati B."/>
            <person name="Basso C."/>
            <person name="Thiene G."/>
            <person name="Towbin J.A."/>
            <person name="Danieli G.A."/>
        </authorList>
    </citation>
    <scope>VARIANT ARVD8 ARG-299</scope>
</reference>
<reference key="42">
    <citation type="journal article" date="2002" name="J. Invest. Dermatol.">
        <title>Compound heterozygosity for non-sense and mis-sense mutations in desmoplakin underlies skin fragility/woolly hair syndrome.</title>
        <authorList>
            <person name="Whittock N.V."/>
            <person name="Wan H."/>
            <person name="Morley S.M."/>
            <person name="Garzon M.C."/>
            <person name="Kristal L."/>
            <person name="Hyde P."/>
            <person name="McLean W.H.I."/>
            <person name="Pulkkinen L."/>
            <person name="Uitto J."/>
            <person name="Christiano A.M."/>
            <person name="Eady R.A.J."/>
            <person name="McGrath J.A."/>
        </authorList>
    </citation>
    <scope>VARIANTS DCWHK LYS-287 AND CYS-2366</scope>
</reference>
<reference key="43">
    <citation type="journal article" date="2003" name="J. Am. Coll. Cardiol.">
        <title>A recessive mutation in desmoplakin causes arrhythmogenic right ventricular dysplasia, skin disorder, and woolly hair.</title>
        <authorList>
            <person name="Alcalai R."/>
            <person name="Metzger S."/>
            <person name="Rosenheck S."/>
            <person name="Meiner V."/>
            <person name="Chajek-Shaul T."/>
        </authorList>
    </citation>
    <scope>VARIANT DCWHK ARG-2375</scope>
</reference>
<reference key="44">
    <citation type="journal article" date="2005" name="Am. J. Hum. Genet.">
        <title>Loss of desmoplakin tail causes lethal acantholytic epidermolysis bullosa.</title>
        <authorList>
            <person name="Jonkman M.F."/>
            <person name="Pasmooij A.M.G."/>
            <person name="Pasmans S.G.M.A."/>
            <person name="van den Berg M.P."/>
            <person name="Ter Horst H.J."/>
            <person name="Timmer A."/>
            <person name="Pas H.H."/>
        </authorList>
    </citation>
    <scope>INVOLVEMENT IN LETHAL ACANTHOLYTIC EPIDERMOLYSIS BULLOSA</scope>
</reference>
<reference key="45">
    <citation type="journal article" date="2005" name="Eur. Heart J.">
        <title>Clinical profile of four families with arrhythmogenic right ventricular cardiomyopathy caused by dominant desmoplakin mutations.</title>
        <authorList>
            <person name="Bauce B."/>
            <person name="Basso C."/>
            <person name="Rampazzo A."/>
            <person name="Beffagna G."/>
            <person name="Daliento L."/>
            <person name="Frigo G."/>
            <person name="Malacrida S."/>
            <person name="Settimo L."/>
            <person name="Danieli G."/>
            <person name="Thiene G."/>
            <person name="Nava A."/>
        </authorList>
    </citation>
    <scope>VARIANTS ARVD8 ARG-299; LYS-1255 AND ILE-1775</scope>
</reference>
<reference key="46">
    <citation type="journal article" date="2009" name="Circ. Cardiovasc. Genet.">
        <title>Comprehensive desmosome mutation analysis in North Americans with arrhythmogenic right ventricular dysplasia/cardiomyopathy.</title>
        <authorList>
            <person name="den Haan A.D."/>
            <person name="Tan B.Y."/>
            <person name="Zikusoka M.N."/>
            <person name="Llado L.I."/>
            <person name="Jain R."/>
            <person name="Daly A."/>
            <person name="Tichnell C."/>
            <person name="James C."/>
            <person name="Amat-Alarcon N."/>
            <person name="Abraham T."/>
            <person name="Russell S.D."/>
            <person name="Bluemke D.A."/>
            <person name="Calkins H."/>
            <person name="Dalal D."/>
            <person name="Judge D.P."/>
        </authorList>
    </citation>
    <scope>VARIANTS ARVD8 ARG-299; LYS-1255 AND ILE-1775</scope>
    <scope>VARIANTS PHE-305; VAL-1505; CYS-1512; LYS-1526; CYS-1537 AND GLN-1738</scope>
</reference>
<reference key="47">
    <citation type="journal article" date="2010" name="Clin. Genet.">
        <title>Role of genetic testing in arrhythmogenic right ventricular cardiomyopathy/dysplasia.</title>
        <authorList>
            <person name="Barahona-Dussault C."/>
            <person name="Benito B."/>
            <person name="Campuzano O."/>
            <person name="Iglesias A."/>
            <person name="Leung T.L."/>
            <person name="Robb L."/>
            <person name="Talajic M."/>
            <person name="Brugada R."/>
        </authorList>
    </citation>
    <scope>VARIANTS PHE-305; CYS-1512; LYS-1526; CYS-1537; CYS-1537; GLN-1738 AND VAL-1833</scope>
</reference>
<reference key="48">
    <citation type="journal article" date="2012" name="Int. J. Cardiol.">
        <title>Expanding the phenotype associated with a desmoplakin dominant mutation: Carvajal/Naxos syndrome associated with leukonychia and oligodontia.</title>
        <authorList>
            <person name="Boule S."/>
            <person name="Fressart V."/>
            <person name="Laux D."/>
            <person name="Mallet A."/>
            <person name="Simon F."/>
            <person name="de Groote P."/>
            <person name="Bonnet D."/>
            <person name="Klug D."/>
            <person name="Charron P."/>
        </authorList>
    </citation>
    <scope>VARIANT DCWHKTA ILE-564</scope>
</reference>